<gene>
    <name type="primary">rpmF</name>
    <name type="ordered locus">b1089</name>
    <name type="ordered locus">JW1075</name>
</gene>
<protein>
    <recommendedName>
        <fullName evidence="13">Large ribosomal subunit protein bL32</fullName>
    </recommendedName>
    <alternativeName>
        <fullName>50S ribosomal protein L32</fullName>
    </alternativeName>
</protein>
<feature type="initiator methionine" description="Removed" evidence="11 12">
    <location>
        <position position="1"/>
    </location>
</feature>
<feature type="chain" id="PRO_0000172338" description="Large ribosomal subunit protein bL32">
    <location>
        <begin position="2"/>
        <end position="57"/>
    </location>
</feature>
<feature type="region of interest" description="Disordered" evidence="1">
    <location>
        <begin position="1"/>
        <end position="38"/>
    </location>
</feature>
<feature type="helix" evidence="16">
    <location>
        <begin position="10"/>
        <end position="16"/>
    </location>
</feature>
<feature type="helix" evidence="16">
    <location>
        <begin position="17"/>
        <end position="19"/>
    </location>
</feature>
<feature type="strand" evidence="17">
    <location>
        <begin position="28"/>
        <end position="30"/>
    </location>
</feature>
<feature type="turn" evidence="16">
    <location>
        <begin position="32"/>
        <end position="34"/>
    </location>
</feature>
<feature type="strand" evidence="17">
    <location>
        <begin position="37"/>
        <end position="39"/>
    </location>
</feature>
<feature type="strand" evidence="16">
    <location>
        <begin position="47"/>
        <end position="49"/>
    </location>
</feature>
<feature type="strand" evidence="15">
    <location>
        <begin position="52"/>
        <end position="55"/>
    </location>
</feature>
<proteinExistence type="evidence at protein level"/>
<organism>
    <name type="scientific">Escherichia coli (strain K12)</name>
    <dbReference type="NCBI Taxonomy" id="83333"/>
    <lineage>
        <taxon>Bacteria</taxon>
        <taxon>Pseudomonadati</taxon>
        <taxon>Pseudomonadota</taxon>
        <taxon>Gammaproteobacteria</taxon>
        <taxon>Enterobacterales</taxon>
        <taxon>Enterobacteriaceae</taxon>
        <taxon>Escherichia</taxon>
    </lineage>
</organism>
<reference key="1">
    <citation type="journal article" date="1989" name="J. Bacteriol.">
        <title>Cloning and analysis of an Escherichia coli operon containing the rpmF gene for ribosomal protein L32 and the gene for a 30-kilodalton protein.</title>
        <authorList>
            <person name="Tanaka Y."/>
            <person name="Tsujimura A."/>
            <person name="Fujita N."/>
            <person name="Isono S."/>
            <person name="Isono K."/>
        </authorList>
    </citation>
    <scope>NUCLEOTIDE SEQUENCE [GENOMIC DNA]</scope>
</reference>
<reference key="2">
    <citation type="journal article" date="1996" name="DNA Res.">
        <title>A 718-kb DNA sequence of the Escherichia coli K-12 genome corresponding to the 12.7-28.0 min region on the linkage map.</title>
        <authorList>
            <person name="Oshima T."/>
            <person name="Aiba H."/>
            <person name="Baba T."/>
            <person name="Fujita K."/>
            <person name="Hayashi K."/>
            <person name="Honjo A."/>
            <person name="Ikemoto K."/>
            <person name="Inada T."/>
            <person name="Itoh T."/>
            <person name="Kajihara M."/>
            <person name="Kanai K."/>
            <person name="Kashimoto K."/>
            <person name="Kimura S."/>
            <person name="Kitagawa M."/>
            <person name="Makino K."/>
            <person name="Masuda S."/>
            <person name="Miki T."/>
            <person name="Mizobuchi K."/>
            <person name="Mori H."/>
            <person name="Motomura K."/>
            <person name="Nakamura Y."/>
            <person name="Nashimoto H."/>
            <person name="Nishio Y."/>
            <person name="Saito N."/>
            <person name="Sampei G."/>
            <person name="Seki Y."/>
            <person name="Tagami H."/>
            <person name="Takemoto K."/>
            <person name="Wada C."/>
            <person name="Yamamoto Y."/>
            <person name="Yano M."/>
            <person name="Horiuchi T."/>
        </authorList>
    </citation>
    <scope>NUCLEOTIDE SEQUENCE [LARGE SCALE GENOMIC DNA]</scope>
    <source>
        <strain>K12 / W3110 / ATCC 27325 / DSM 5911</strain>
    </source>
</reference>
<reference key="3">
    <citation type="journal article" date="1997" name="Science">
        <title>The complete genome sequence of Escherichia coli K-12.</title>
        <authorList>
            <person name="Blattner F.R."/>
            <person name="Plunkett G. III"/>
            <person name="Bloch C.A."/>
            <person name="Perna N.T."/>
            <person name="Burland V."/>
            <person name="Riley M."/>
            <person name="Collado-Vides J."/>
            <person name="Glasner J.D."/>
            <person name="Rode C.K."/>
            <person name="Mayhew G.F."/>
            <person name="Gregor J."/>
            <person name="Davis N.W."/>
            <person name="Kirkpatrick H.A."/>
            <person name="Goeden M.A."/>
            <person name="Rose D.J."/>
            <person name="Mau B."/>
            <person name="Shao Y."/>
        </authorList>
    </citation>
    <scope>NUCLEOTIDE SEQUENCE [LARGE SCALE GENOMIC DNA]</scope>
    <source>
        <strain>K12 / MG1655 / ATCC 47076</strain>
    </source>
</reference>
<reference key="4">
    <citation type="journal article" date="2006" name="Mol. Syst. Biol.">
        <title>Highly accurate genome sequences of Escherichia coli K-12 strains MG1655 and W3110.</title>
        <authorList>
            <person name="Hayashi K."/>
            <person name="Morooka N."/>
            <person name="Yamamoto Y."/>
            <person name="Fujita K."/>
            <person name="Isono K."/>
            <person name="Choi S."/>
            <person name="Ohtsubo E."/>
            <person name="Baba T."/>
            <person name="Wanner B.L."/>
            <person name="Mori H."/>
            <person name="Horiuchi T."/>
        </authorList>
    </citation>
    <scope>NUCLEOTIDE SEQUENCE [LARGE SCALE GENOMIC DNA]</scope>
    <source>
        <strain>K12 / W3110 / ATCC 27325 / DSM 5911</strain>
    </source>
</reference>
<reference key="5">
    <citation type="journal article" date="1975" name="Hoppe-Seyler's Z. Physiol. Chem.">
        <title>The primary structure of protein L32 from the 50S subunit of Escherichia coli ribosomes.</title>
        <authorList>
            <person name="Wittmann-Liebold B."/>
            <person name="Greuer B."/>
            <person name="Pannenbecker R."/>
        </authorList>
    </citation>
    <scope>PROTEIN SEQUENCE OF 2-57</scope>
    <scope>SUBUNIT</scope>
    <source>
        <strain>K</strain>
    </source>
</reference>
<reference key="6">
    <citation type="journal article" date="1976" name="Bioorg. Khim.">
        <title>The primary structure of ribosomal protein L32 from E. coli MRE-600 ribosomes.</title>
        <authorList>
            <person name="Vinokurov L.M."/>
            <person name="Alakhov Y.B."/>
            <person name="Golov E.A."/>
            <person name="Ovchinnikov Y.A."/>
        </authorList>
    </citation>
    <scope>PROTEIN SEQUENCE OF 2-57</scope>
    <source>
        <strain>MRE-600</strain>
    </source>
</reference>
<reference key="7">
    <citation type="journal article" date="1989" name="Biochemistry">
        <title>Comparative cross-linking study on the 50S ribosomal subunit from Escherichia coli.</title>
        <authorList>
            <person name="Walleczek J."/>
            <person name="Martin T."/>
            <person name="Redl B."/>
            <person name="Stoeffler-Meilicke M."/>
            <person name="Stoeffler G."/>
        </authorList>
    </citation>
    <scope>CROSS-LINKING TO L17</scope>
</reference>
<reference key="8">
    <citation type="journal article" date="1997" name="Electrophoresis">
        <title>Escherichia coli proteome analysis using the gene-protein database.</title>
        <authorList>
            <person name="VanBogelen R.A."/>
            <person name="Abshire K.Z."/>
            <person name="Moldover B."/>
            <person name="Olson E.R."/>
            <person name="Neidhardt F.C."/>
        </authorList>
    </citation>
    <scope>IDENTIFICATION BY 2D-GEL</scope>
</reference>
<reference key="9">
    <citation type="journal article" date="1999" name="Anal. Biochem.">
        <title>Observation of Escherichia coli ribosomal proteins and their posttranslational modifications by mass spectrometry.</title>
        <authorList>
            <person name="Arnold R.J."/>
            <person name="Reilly J.P."/>
        </authorList>
    </citation>
    <scope>MASS SPECTROMETRY</scope>
    <scope>SUBUNIT</scope>
    <source>
        <strain>K12 / ATCC 25404 / DSM 5698 / NCIMB 11290</strain>
    </source>
</reference>
<reference key="10">
    <citation type="journal article" date="2014" name="Curr. Opin. Struct. Biol.">
        <title>A new system for naming ribosomal proteins.</title>
        <authorList>
            <person name="Ban N."/>
            <person name="Beckmann R."/>
            <person name="Cate J.H.D."/>
            <person name="Dinman J.D."/>
            <person name="Dragon F."/>
            <person name="Ellis S.R."/>
            <person name="Lafontaine D.L.J."/>
            <person name="Lindahl L."/>
            <person name="Liljas A."/>
            <person name="Lipton J.M."/>
            <person name="McAlear M.A."/>
            <person name="Moore P.B."/>
            <person name="Noller H.F."/>
            <person name="Ortega J."/>
            <person name="Panse V.G."/>
            <person name="Ramakrishnan V."/>
            <person name="Spahn C.M.T."/>
            <person name="Steitz T.A."/>
            <person name="Tchorzewski M."/>
            <person name="Tollervey D."/>
            <person name="Warren A.J."/>
            <person name="Williamson J.R."/>
            <person name="Wilson D."/>
            <person name="Yonath A."/>
            <person name="Yusupov M."/>
        </authorList>
    </citation>
    <scope>NOMENCLATURE</scope>
</reference>
<reference key="11">
    <citation type="journal article" date="2003" name="Cell">
        <title>Study of the structural dynamics of the E. coli 70S ribosome using real-space refinement.</title>
        <authorList>
            <person name="Gao H."/>
            <person name="Sengupta J."/>
            <person name="Valle M."/>
            <person name="Korostelev A."/>
            <person name="Eswar N."/>
            <person name="Stagg S.M."/>
            <person name="Van Roey P."/>
            <person name="Agrawal R.K."/>
            <person name="Harvey S.C."/>
            <person name="Sali A."/>
            <person name="Chapman M.S."/>
            <person name="Frank J."/>
        </authorList>
    </citation>
    <scope>STRUCTURE BY ELECTRON MICROSCOPY (11.50 ANGSTROMS)</scope>
    <scope>SUBUNIT</scope>
    <source>
        <strain>MRE-600</strain>
    </source>
</reference>
<reference key="12">
    <citation type="journal article" date="2005" name="Science">
        <title>Structures of the bacterial ribosome at 3.5 A resolution.</title>
        <authorList>
            <person name="Schuwirth B.S."/>
            <person name="Borovinskaya M.A."/>
            <person name="Hau C.W."/>
            <person name="Zhang W."/>
            <person name="Vila-Sanjurjo A."/>
            <person name="Holton J.M."/>
            <person name="Cate J.H.D."/>
        </authorList>
    </citation>
    <scope>X-RAY CRYSTALLOGRAPHY (3.46 ANGSTROMS) OF 2 DIFFERENT RIBOSOME STRUCTURES</scope>
    <scope>SUBUNIT</scope>
    <source>
        <strain>MRE-600</strain>
    </source>
</reference>
<reference key="13">
    <citation type="journal article" date="2014" name="Cell Rep.">
        <title>Molecular basis for the ribosome functioning as an L-tryptophan sensor.</title>
        <authorList>
            <person name="Bischoff L."/>
            <person name="Berninghausen O."/>
            <person name="Beckmann R."/>
        </authorList>
    </citation>
    <scope>STRUCTURE BY ELECTRON MICROSCOPY (3.80 ANGSTROMS) OF 2-57 IN TNAC-STALLED 50S RIBOSOMAL SUBUNIT</scope>
    <scope>SUBUNIT</scope>
    <source>
        <strain>K12 / A19 / KC6</strain>
    </source>
</reference>
<reference key="14">
    <citation type="journal article" date="2014" name="PLoS Biol.">
        <title>Structural and functional insights into the mode of action of a universally conserved Obg GTPase.</title>
        <authorList>
            <person name="Feng B."/>
            <person name="Mandava C.S."/>
            <person name="Guo Q."/>
            <person name="Wang J."/>
            <person name="Cao W."/>
            <person name="Li N."/>
            <person name="Zhang Y."/>
            <person name="Zhang Y."/>
            <person name="Wang Z."/>
            <person name="Wu J."/>
            <person name="Sanyal S."/>
            <person name="Lei J."/>
            <person name="Gao N."/>
        </authorList>
    </citation>
    <scope>STRUCTURE BY ELECTRON MICROSCOPY (5.5 ANGSTROMS) OF 2-57 OF 50S RIBOSOMAL SUBUNIT IN COMPLEX WITH OBGE AND GMP-PNP</scope>
    <scope>SUBUNIT</scope>
</reference>
<reference key="15">
    <citation type="journal article" date="2017" name="Nature">
        <title>Mechanistic insights into the alternative translation termination by ArfA and RF2.</title>
        <authorList>
            <person name="Ma C."/>
            <person name="Kurita D."/>
            <person name="Li N."/>
            <person name="Chen Y."/>
            <person name="Himeno H."/>
            <person name="Gao N."/>
        </authorList>
    </citation>
    <scope>STRUCTURE BY ELECTRON MICROSCOPY (3.0 ANGSTROMS) OF 70S RIBOSOME IN COMPLEX WITH ARFA AND RF2</scope>
    <scope>SUBUNIT</scope>
</reference>
<reference key="16">
    <citation type="journal article" date="2017" name="Nature">
        <title>Structural basis for ArfA-RF2-mediated translation termination on mRNAs lacking stop codons.</title>
        <authorList>
            <person name="Huter P."/>
            <person name="Mueller C."/>
            <person name="Beckert B."/>
            <person name="Arenz S."/>
            <person name="Berninghausen O."/>
            <person name="Beckmann R."/>
            <person name="Wilson D.N."/>
        </authorList>
    </citation>
    <scope>STRUCTURE BY ELECTRON MICROSCOPY (3.1 ANGSTROMS) OF 70S RIBOSOME IN COMPLEX WITH ARFA AND RF2</scope>
    <scope>SUBUNIT</scope>
</reference>
<reference key="17">
    <citation type="journal article" date="2016" name="Science">
        <title>Translational termination without a stop codon.</title>
        <authorList>
            <person name="James N.R."/>
            <person name="Brown A."/>
            <person name="Gordiyenko Y."/>
            <person name="Ramakrishnan V."/>
        </authorList>
    </citation>
    <scope>STRUCTURE BY ELECTRON MICROSCOPY (2.97 ANGSTROMS) OF 70S RIBOSOME IN COMPLEX WITH ARFA AND RF2</scope>
    <scope>SUBUNIT</scope>
</reference>
<reference key="18">
    <citation type="journal article" date="2017" name="Nature">
        <title>Structural basis of co-translational quality control by ArfA and RF2 bound to ribosome.</title>
        <authorList>
            <person name="Zeng F."/>
            <person name="Chen Y."/>
            <person name="Remis J."/>
            <person name="Shekhar M."/>
            <person name="Phillips J.C."/>
            <person name="Tajkhorshid E."/>
            <person name="Jin H."/>
        </authorList>
    </citation>
    <scope>STRUCTURE BY ELECTRON MICROSCOPY (3.52 ANGSTROMS) OF 70S RIBOSOME IN COMPLEX WITH ARFA AND RF2</scope>
    <scope>SUBUNIT</scope>
</reference>
<dbReference type="EMBL" id="M29698">
    <property type="protein sequence ID" value="AAA24575.1"/>
    <property type="molecule type" value="Genomic_DNA"/>
</dbReference>
<dbReference type="EMBL" id="U00096">
    <property type="protein sequence ID" value="AAC74173.1"/>
    <property type="molecule type" value="Genomic_DNA"/>
</dbReference>
<dbReference type="EMBL" id="AP009048">
    <property type="protein sequence ID" value="BAA35897.1"/>
    <property type="molecule type" value="Genomic_DNA"/>
</dbReference>
<dbReference type="PIR" id="JV0048">
    <property type="entry name" value="R5EC32"/>
</dbReference>
<dbReference type="RefSeq" id="NP_415607.1">
    <property type="nucleotide sequence ID" value="NC_000913.3"/>
</dbReference>
<dbReference type="RefSeq" id="WP_000290727.1">
    <property type="nucleotide sequence ID" value="NZ_STEB01000016.1"/>
</dbReference>
<dbReference type="PDB" id="2J28">
    <property type="method" value="EM"/>
    <property type="resolution" value="8.00 A"/>
    <property type="chains" value="0=2-57"/>
</dbReference>
<dbReference type="PDB" id="2RDO">
    <property type="method" value="EM"/>
    <property type="resolution" value="9.10 A"/>
    <property type="chains" value="0=2-57"/>
</dbReference>
<dbReference type="PDB" id="3BBX">
    <property type="method" value="EM"/>
    <property type="resolution" value="10.00 A"/>
    <property type="chains" value="0=2-57"/>
</dbReference>
<dbReference type="PDB" id="3J5L">
    <property type="method" value="EM"/>
    <property type="resolution" value="6.60 A"/>
    <property type="chains" value="0=2-57"/>
</dbReference>
<dbReference type="PDB" id="3J7Z">
    <property type="method" value="EM"/>
    <property type="resolution" value="3.90 A"/>
    <property type="chains" value="0=1-57"/>
</dbReference>
<dbReference type="PDB" id="3J8G">
    <property type="method" value="EM"/>
    <property type="resolution" value="5.00 A"/>
    <property type="chains" value="3=1-57"/>
</dbReference>
<dbReference type="PDB" id="3J9Y">
    <property type="method" value="EM"/>
    <property type="resolution" value="3.90 A"/>
    <property type="chains" value="0=1-57"/>
</dbReference>
<dbReference type="PDB" id="3J9Z">
    <property type="method" value="EM"/>
    <property type="resolution" value="3.60 A"/>
    <property type="chains" value="L1=2-57"/>
</dbReference>
<dbReference type="PDB" id="3JA1">
    <property type="method" value="EM"/>
    <property type="resolution" value="3.60 A"/>
    <property type="chains" value="L3=2-57"/>
</dbReference>
<dbReference type="PDB" id="3JBU">
    <property type="method" value="EM"/>
    <property type="resolution" value="3.64 A"/>
    <property type="chains" value="3=1-57"/>
</dbReference>
<dbReference type="PDB" id="3JBV">
    <property type="method" value="EM"/>
    <property type="resolution" value="3.32 A"/>
    <property type="chains" value="3=1-57"/>
</dbReference>
<dbReference type="PDB" id="3JCD">
    <property type="method" value="EM"/>
    <property type="resolution" value="3.70 A"/>
    <property type="chains" value="0=1-57"/>
</dbReference>
<dbReference type="PDB" id="3JCE">
    <property type="method" value="EM"/>
    <property type="resolution" value="3.20 A"/>
    <property type="chains" value="0=1-57"/>
</dbReference>
<dbReference type="PDB" id="3JCJ">
    <property type="method" value="EM"/>
    <property type="resolution" value="3.70 A"/>
    <property type="chains" value="Z=1-57"/>
</dbReference>
<dbReference type="PDB" id="3JCN">
    <property type="method" value="EM"/>
    <property type="resolution" value="4.60 A"/>
    <property type="chains" value="0=1-57"/>
</dbReference>
<dbReference type="PDB" id="4CSU">
    <property type="method" value="EM"/>
    <property type="resolution" value="5.50 A"/>
    <property type="chains" value="3=2-57"/>
</dbReference>
<dbReference type="PDB" id="4U1U">
    <property type="method" value="X-ray"/>
    <property type="resolution" value="2.95 A"/>
    <property type="chains" value="B0/D0=2-57"/>
</dbReference>
<dbReference type="PDB" id="4U1V">
    <property type="method" value="X-ray"/>
    <property type="resolution" value="3.00 A"/>
    <property type="chains" value="B0/D0=2-57"/>
</dbReference>
<dbReference type="PDB" id="4U20">
    <property type="method" value="X-ray"/>
    <property type="resolution" value="2.90 A"/>
    <property type="chains" value="B0/D0=2-57"/>
</dbReference>
<dbReference type="PDB" id="4U24">
    <property type="method" value="X-ray"/>
    <property type="resolution" value="2.90 A"/>
    <property type="chains" value="B0/D0=2-57"/>
</dbReference>
<dbReference type="PDB" id="4U25">
    <property type="method" value="X-ray"/>
    <property type="resolution" value="2.90 A"/>
    <property type="chains" value="B0/D0=2-57"/>
</dbReference>
<dbReference type="PDB" id="4U26">
    <property type="method" value="X-ray"/>
    <property type="resolution" value="2.80 A"/>
    <property type="chains" value="B0/D0=2-57"/>
</dbReference>
<dbReference type="PDB" id="4U27">
    <property type="method" value="X-ray"/>
    <property type="resolution" value="2.80 A"/>
    <property type="chains" value="B0/D0=2-57"/>
</dbReference>
<dbReference type="PDB" id="4UY8">
    <property type="method" value="EM"/>
    <property type="resolution" value="3.80 A"/>
    <property type="chains" value="0=2-57"/>
</dbReference>
<dbReference type="PDB" id="4V47">
    <property type="method" value="EM"/>
    <property type="resolution" value="12.30 A"/>
    <property type="chains" value="AZ=2-57"/>
</dbReference>
<dbReference type="PDB" id="4V48">
    <property type="method" value="EM"/>
    <property type="resolution" value="11.50 A"/>
    <property type="chains" value="AZ=2-57"/>
</dbReference>
<dbReference type="PDB" id="4V4H">
    <property type="method" value="X-ray"/>
    <property type="resolution" value="3.46 A"/>
    <property type="chains" value="B0/D0=1-57"/>
</dbReference>
<dbReference type="PDB" id="4V4Q">
    <property type="method" value="X-ray"/>
    <property type="resolution" value="3.46 A"/>
    <property type="chains" value="B0/D0=2-57"/>
</dbReference>
<dbReference type="PDB" id="4V4V">
    <property type="method" value="EM"/>
    <property type="resolution" value="15.00 A"/>
    <property type="chains" value="BZ=28-56"/>
</dbReference>
<dbReference type="PDB" id="4V4W">
    <property type="method" value="EM"/>
    <property type="resolution" value="15.00 A"/>
    <property type="chains" value="BZ=28-56"/>
</dbReference>
<dbReference type="PDB" id="4V50">
    <property type="method" value="X-ray"/>
    <property type="resolution" value="3.22 A"/>
    <property type="chains" value="B0/D0=2-57"/>
</dbReference>
<dbReference type="PDB" id="4V52">
    <property type="method" value="X-ray"/>
    <property type="resolution" value="3.21 A"/>
    <property type="chains" value="B0/D0=2-57"/>
</dbReference>
<dbReference type="PDB" id="4V53">
    <property type="method" value="X-ray"/>
    <property type="resolution" value="3.54 A"/>
    <property type="chains" value="B0/D0=2-57"/>
</dbReference>
<dbReference type="PDB" id="4V54">
    <property type="method" value="X-ray"/>
    <property type="resolution" value="3.30 A"/>
    <property type="chains" value="B0/D0=2-57"/>
</dbReference>
<dbReference type="PDB" id="4V55">
    <property type="method" value="X-ray"/>
    <property type="resolution" value="4.00 A"/>
    <property type="chains" value="B0/D0=2-57"/>
</dbReference>
<dbReference type="PDB" id="4V56">
    <property type="method" value="X-ray"/>
    <property type="resolution" value="3.93 A"/>
    <property type="chains" value="B0/D0=2-57"/>
</dbReference>
<dbReference type="PDB" id="4V57">
    <property type="method" value="X-ray"/>
    <property type="resolution" value="3.50 A"/>
    <property type="chains" value="B0/D0=2-57"/>
</dbReference>
<dbReference type="PDB" id="4V5B">
    <property type="method" value="X-ray"/>
    <property type="resolution" value="3.74 A"/>
    <property type="chains" value="A0/C0=2-57"/>
</dbReference>
<dbReference type="PDB" id="4V5H">
    <property type="method" value="EM"/>
    <property type="resolution" value="5.80 A"/>
    <property type="chains" value="B3=2-57"/>
</dbReference>
<dbReference type="PDB" id="4V5Y">
    <property type="method" value="X-ray"/>
    <property type="resolution" value="4.45 A"/>
    <property type="chains" value="B0/D0=2-57"/>
</dbReference>
<dbReference type="PDB" id="4V64">
    <property type="method" value="X-ray"/>
    <property type="resolution" value="3.50 A"/>
    <property type="chains" value="B0/D0=2-57"/>
</dbReference>
<dbReference type="PDB" id="4V65">
    <property type="method" value="EM"/>
    <property type="resolution" value="9.00 A"/>
    <property type="chains" value="BT=1-57"/>
</dbReference>
<dbReference type="PDB" id="4V66">
    <property type="method" value="EM"/>
    <property type="resolution" value="9.00 A"/>
    <property type="chains" value="BT=1-57"/>
</dbReference>
<dbReference type="PDB" id="4V69">
    <property type="method" value="EM"/>
    <property type="resolution" value="6.70 A"/>
    <property type="chains" value="B0=2-57"/>
</dbReference>
<dbReference type="PDB" id="4V6C">
    <property type="method" value="X-ray"/>
    <property type="resolution" value="3.19 A"/>
    <property type="chains" value="B0/D0=1-57"/>
</dbReference>
<dbReference type="PDB" id="4V6D">
    <property type="method" value="X-ray"/>
    <property type="resolution" value="3.81 A"/>
    <property type="chains" value="B0/D0=1-57"/>
</dbReference>
<dbReference type="PDB" id="4V6E">
    <property type="method" value="X-ray"/>
    <property type="resolution" value="3.71 A"/>
    <property type="chains" value="B0/D0=1-57"/>
</dbReference>
<dbReference type="PDB" id="4V6K">
    <property type="method" value="EM"/>
    <property type="resolution" value="8.25 A"/>
    <property type="chains" value="Ac=1-57"/>
</dbReference>
<dbReference type="PDB" id="4V6L">
    <property type="method" value="EM"/>
    <property type="resolution" value="13.20 A"/>
    <property type="chains" value="Bc=1-57"/>
</dbReference>
<dbReference type="PDB" id="4V6M">
    <property type="method" value="EM"/>
    <property type="resolution" value="7.10 A"/>
    <property type="chains" value="B0=2-57"/>
</dbReference>
<dbReference type="PDB" id="4V6N">
    <property type="method" value="EM"/>
    <property type="resolution" value="12.10 A"/>
    <property type="chains" value="A3=2-57"/>
</dbReference>
<dbReference type="PDB" id="4V6O">
    <property type="method" value="EM"/>
    <property type="resolution" value="14.70 A"/>
    <property type="chains" value="B3=2-57"/>
</dbReference>
<dbReference type="PDB" id="4V6P">
    <property type="method" value="EM"/>
    <property type="resolution" value="13.50 A"/>
    <property type="chains" value="B3=2-57"/>
</dbReference>
<dbReference type="PDB" id="4V6Q">
    <property type="method" value="EM"/>
    <property type="resolution" value="11.50 A"/>
    <property type="chains" value="B3=2-57"/>
</dbReference>
<dbReference type="PDB" id="4V6R">
    <property type="method" value="EM"/>
    <property type="resolution" value="11.50 A"/>
    <property type="chains" value="B3=2-57"/>
</dbReference>
<dbReference type="PDB" id="4V6S">
    <property type="method" value="EM"/>
    <property type="resolution" value="13.10 A"/>
    <property type="chains" value="A3=2-57"/>
</dbReference>
<dbReference type="PDB" id="4V6T">
    <property type="method" value="EM"/>
    <property type="resolution" value="8.30 A"/>
    <property type="chains" value="B0=2-57"/>
</dbReference>
<dbReference type="PDB" id="4V6V">
    <property type="method" value="EM"/>
    <property type="resolution" value="9.80 A"/>
    <property type="chains" value="B5=2-57"/>
</dbReference>
<dbReference type="PDB" id="4V6Y">
    <property type="method" value="EM"/>
    <property type="resolution" value="12.00 A"/>
    <property type="chains" value="B0=1-57"/>
</dbReference>
<dbReference type="PDB" id="4V6Z">
    <property type="method" value="EM"/>
    <property type="resolution" value="12.00 A"/>
    <property type="chains" value="B0=1-57"/>
</dbReference>
<dbReference type="PDB" id="4V70">
    <property type="method" value="EM"/>
    <property type="resolution" value="17.00 A"/>
    <property type="chains" value="B0=1-57"/>
</dbReference>
<dbReference type="PDB" id="4V71">
    <property type="method" value="EM"/>
    <property type="resolution" value="20.00 A"/>
    <property type="chains" value="B0=1-57"/>
</dbReference>
<dbReference type="PDB" id="4V72">
    <property type="method" value="EM"/>
    <property type="resolution" value="13.00 A"/>
    <property type="chains" value="B0=1-57"/>
</dbReference>
<dbReference type="PDB" id="4V73">
    <property type="method" value="EM"/>
    <property type="resolution" value="15.00 A"/>
    <property type="chains" value="B0=1-57"/>
</dbReference>
<dbReference type="PDB" id="4V74">
    <property type="method" value="EM"/>
    <property type="resolution" value="17.00 A"/>
    <property type="chains" value="B0=1-57"/>
</dbReference>
<dbReference type="PDB" id="4V75">
    <property type="method" value="EM"/>
    <property type="resolution" value="12.00 A"/>
    <property type="chains" value="B0=1-57"/>
</dbReference>
<dbReference type="PDB" id="4V76">
    <property type="method" value="EM"/>
    <property type="resolution" value="17.00 A"/>
    <property type="chains" value="B0=1-57"/>
</dbReference>
<dbReference type="PDB" id="4V77">
    <property type="method" value="EM"/>
    <property type="resolution" value="17.00 A"/>
    <property type="chains" value="B0=1-57"/>
</dbReference>
<dbReference type="PDB" id="4V78">
    <property type="method" value="EM"/>
    <property type="resolution" value="20.00 A"/>
    <property type="chains" value="B0=1-57"/>
</dbReference>
<dbReference type="PDB" id="4V79">
    <property type="method" value="EM"/>
    <property type="resolution" value="15.00 A"/>
    <property type="chains" value="B0=1-57"/>
</dbReference>
<dbReference type="PDB" id="4V7A">
    <property type="method" value="EM"/>
    <property type="resolution" value="9.00 A"/>
    <property type="chains" value="B0=1-57"/>
</dbReference>
<dbReference type="PDB" id="4V7B">
    <property type="method" value="EM"/>
    <property type="resolution" value="6.80 A"/>
    <property type="chains" value="B0=1-57"/>
</dbReference>
<dbReference type="PDB" id="4V7C">
    <property type="method" value="EM"/>
    <property type="resolution" value="7.60 A"/>
    <property type="chains" value="B3=2-57"/>
</dbReference>
<dbReference type="PDB" id="4V7D">
    <property type="method" value="EM"/>
    <property type="resolution" value="7.60 A"/>
    <property type="chains" value="A4=2-57"/>
</dbReference>
<dbReference type="PDB" id="4V7I">
    <property type="method" value="EM"/>
    <property type="resolution" value="9.60 A"/>
    <property type="chains" value="A0=1-57"/>
</dbReference>
<dbReference type="PDB" id="4V7S">
    <property type="method" value="X-ray"/>
    <property type="resolution" value="3.25 A"/>
    <property type="chains" value="B0/D0=2-57"/>
</dbReference>
<dbReference type="PDB" id="4V7T">
    <property type="method" value="X-ray"/>
    <property type="resolution" value="3.19 A"/>
    <property type="chains" value="B0/D0=2-57"/>
</dbReference>
<dbReference type="PDB" id="4V7U">
    <property type="method" value="X-ray"/>
    <property type="resolution" value="3.10 A"/>
    <property type="chains" value="B0/D0=2-57"/>
</dbReference>
<dbReference type="PDB" id="4V7V">
    <property type="method" value="X-ray"/>
    <property type="resolution" value="3.29 A"/>
    <property type="chains" value="B0/D0=2-57"/>
</dbReference>
<dbReference type="PDB" id="4V85">
    <property type="method" value="X-ray"/>
    <property type="resolution" value="3.20 A"/>
    <property type="chains" value="B4=1-57"/>
</dbReference>
<dbReference type="PDB" id="4V89">
    <property type="method" value="X-ray"/>
    <property type="resolution" value="3.70 A"/>
    <property type="chains" value="B4=1-57"/>
</dbReference>
<dbReference type="PDB" id="4V9C">
    <property type="method" value="X-ray"/>
    <property type="resolution" value="3.30 A"/>
    <property type="chains" value="B0/D0=1-57"/>
</dbReference>
<dbReference type="PDB" id="4V9D">
    <property type="method" value="X-ray"/>
    <property type="resolution" value="3.00 A"/>
    <property type="chains" value="C0/D0=2-57"/>
</dbReference>
<dbReference type="PDB" id="4V9O">
    <property type="method" value="X-ray"/>
    <property type="resolution" value="2.90 A"/>
    <property type="chains" value="A0/C0/E0/G0=1-57"/>
</dbReference>
<dbReference type="PDB" id="4V9P">
    <property type="method" value="X-ray"/>
    <property type="resolution" value="2.90 A"/>
    <property type="chains" value="A0/C0/E0/G0=1-57"/>
</dbReference>
<dbReference type="PDB" id="4WF1">
    <property type="method" value="X-ray"/>
    <property type="resolution" value="3.09 A"/>
    <property type="chains" value="B0/D0=2-57"/>
</dbReference>
<dbReference type="PDB" id="4WOI">
    <property type="method" value="X-ray"/>
    <property type="resolution" value="3.00 A"/>
    <property type="chains" value="B0/C0=1-57"/>
</dbReference>
<dbReference type="PDB" id="4WWW">
    <property type="method" value="X-ray"/>
    <property type="resolution" value="3.10 A"/>
    <property type="chains" value="R0/Y0=2-57"/>
</dbReference>
<dbReference type="PDB" id="4YBB">
    <property type="method" value="X-ray"/>
    <property type="resolution" value="2.10 A"/>
    <property type="chains" value="C1/D1=2-57"/>
</dbReference>
<dbReference type="PDB" id="5ADY">
    <property type="method" value="EM"/>
    <property type="resolution" value="4.50 A"/>
    <property type="chains" value="0=1-57"/>
</dbReference>
<dbReference type="PDB" id="5AFI">
    <property type="method" value="EM"/>
    <property type="resolution" value="2.90 A"/>
    <property type="chains" value="0=1-57"/>
</dbReference>
<dbReference type="PDB" id="5AKA">
    <property type="method" value="EM"/>
    <property type="resolution" value="5.70 A"/>
    <property type="chains" value="0=2-57"/>
</dbReference>
<dbReference type="PDB" id="5GAD">
    <property type="method" value="EM"/>
    <property type="resolution" value="3.70 A"/>
    <property type="chains" value="b=1-57"/>
</dbReference>
<dbReference type="PDB" id="5GAE">
    <property type="method" value="EM"/>
    <property type="resolution" value="3.33 A"/>
    <property type="chains" value="b=1-57"/>
</dbReference>
<dbReference type="PDB" id="5GAF">
    <property type="method" value="EM"/>
    <property type="resolution" value="4.30 A"/>
    <property type="chains" value="b=2-57"/>
</dbReference>
<dbReference type="PDB" id="5GAG">
    <property type="method" value="EM"/>
    <property type="resolution" value="3.80 A"/>
    <property type="chains" value="b=1-57"/>
</dbReference>
<dbReference type="PDB" id="5GAH">
    <property type="method" value="EM"/>
    <property type="resolution" value="3.80 A"/>
    <property type="chains" value="b=1-57"/>
</dbReference>
<dbReference type="PDB" id="5H5U">
    <property type="method" value="EM"/>
    <property type="resolution" value="3.00 A"/>
    <property type="chains" value="b=2-57"/>
</dbReference>
<dbReference type="PDB" id="5IQR">
    <property type="method" value="EM"/>
    <property type="resolution" value="3.00 A"/>
    <property type="chains" value="b=1-57"/>
</dbReference>
<dbReference type="PDB" id="5IT8">
    <property type="method" value="X-ray"/>
    <property type="resolution" value="3.12 A"/>
    <property type="chains" value="C1/D1=2-57"/>
</dbReference>
<dbReference type="PDB" id="5J5B">
    <property type="method" value="X-ray"/>
    <property type="resolution" value="2.80 A"/>
    <property type="chains" value="C1/D1=2-57"/>
</dbReference>
<dbReference type="PDB" id="5J7L">
    <property type="method" value="X-ray"/>
    <property type="resolution" value="3.00 A"/>
    <property type="chains" value="C1/D1=2-57"/>
</dbReference>
<dbReference type="PDB" id="5J88">
    <property type="method" value="X-ray"/>
    <property type="resolution" value="3.32 A"/>
    <property type="chains" value="C1/D1=2-57"/>
</dbReference>
<dbReference type="PDB" id="5J8A">
    <property type="method" value="X-ray"/>
    <property type="resolution" value="3.10 A"/>
    <property type="chains" value="C1/D1=2-57"/>
</dbReference>
<dbReference type="PDB" id="5J91">
    <property type="method" value="X-ray"/>
    <property type="resolution" value="2.96 A"/>
    <property type="chains" value="C1/D1=2-57"/>
</dbReference>
<dbReference type="PDB" id="5JC9">
    <property type="method" value="X-ray"/>
    <property type="resolution" value="3.03 A"/>
    <property type="chains" value="C1/D1=2-57"/>
</dbReference>
<dbReference type="PDB" id="5JTE">
    <property type="method" value="EM"/>
    <property type="resolution" value="3.60 A"/>
    <property type="chains" value="B0=1-57"/>
</dbReference>
<dbReference type="PDB" id="5JU8">
    <property type="method" value="EM"/>
    <property type="resolution" value="3.60 A"/>
    <property type="chains" value="B0=1-57"/>
</dbReference>
<dbReference type="PDB" id="5KCR">
    <property type="method" value="EM"/>
    <property type="resolution" value="3.60 A"/>
    <property type="chains" value="15=1-57"/>
</dbReference>
<dbReference type="PDB" id="5KCS">
    <property type="method" value="EM"/>
    <property type="resolution" value="3.90 A"/>
    <property type="chains" value="15=1-57"/>
</dbReference>
<dbReference type="PDB" id="5KPS">
    <property type="method" value="EM"/>
    <property type="resolution" value="3.90 A"/>
    <property type="chains" value="2=1-57"/>
</dbReference>
<dbReference type="PDB" id="5KPV">
    <property type="method" value="EM"/>
    <property type="resolution" value="4.10 A"/>
    <property type="chains" value="1=1-57"/>
</dbReference>
<dbReference type="PDB" id="5KPW">
    <property type="method" value="EM"/>
    <property type="resolution" value="3.90 A"/>
    <property type="chains" value="1=1-57"/>
</dbReference>
<dbReference type="PDB" id="5KPX">
    <property type="method" value="EM"/>
    <property type="resolution" value="3.90 A"/>
    <property type="chains" value="1=1-57"/>
</dbReference>
<dbReference type="PDB" id="5L3P">
    <property type="method" value="EM"/>
    <property type="resolution" value="3.70 A"/>
    <property type="chains" value="5=1-57"/>
</dbReference>
<dbReference type="PDB" id="5LZA">
    <property type="method" value="EM"/>
    <property type="resolution" value="3.60 A"/>
    <property type="chains" value="0=2-57"/>
</dbReference>
<dbReference type="PDB" id="5LZB">
    <property type="method" value="EM"/>
    <property type="resolution" value="5.30 A"/>
    <property type="chains" value="0=2-57"/>
</dbReference>
<dbReference type="PDB" id="5LZC">
    <property type="method" value="EM"/>
    <property type="resolution" value="4.80 A"/>
    <property type="chains" value="0=2-57"/>
</dbReference>
<dbReference type="PDB" id="5LZD">
    <property type="method" value="EM"/>
    <property type="resolution" value="3.40 A"/>
    <property type="chains" value="0=2-57"/>
</dbReference>
<dbReference type="PDB" id="5LZE">
    <property type="method" value="EM"/>
    <property type="resolution" value="3.50 A"/>
    <property type="chains" value="0=2-57"/>
</dbReference>
<dbReference type="PDB" id="5LZF">
    <property type="method" value="EM"/>
    <property type="resolution" value="4.60 A"/>
    <property type="chains" value="0=2-57"/>
</dbReference>
<dbReference type="PDB" id="5MDV">
    <property type="method" value="EM"/>
    <property type="resolution" value="2.97 A"/>
    <property type="chains" value="b=1-57"/>
</dbReference>
<dbReference type="PDB" id="5MDW">
    <property type="method" value="EM"/>
    <property type="resolution" value="3.06 A"/>
    <property type="chains" value="b=1-57"/>
</dbReference>
<dbReference type="PDB" id="5MDY">
    <property type="method" value="EM"/>
    <property type="resolution" value="3.35 A"/>
    <property type="chains" value="b=1-57"/>
</dbReference>
<dbReference type="PDB" id="5MDZ">
    <property type="method" value="EM"/>
    <property type="resolution" value="3.10 A"/>
    <property type="chains" value="b=1-57"/>
</dbReference>
<dbReference type="PDB" id="5MGP">
    <property type="method" value="EM"/>
    <property type="resolution" value="3.10 A"/>
    <property type="chains" value="0=2-57"/>
</dbReference>
<dbReference type="PDB" id="5NCO">
    <property type="method" value="EM"/>
    <property type="resolution" value="4.80 A"/>
    <property type="chains" value="b=2-57"/>
</dbReference>
<dbReference type="PDB" id="5NP6">
    <property type="method" value="EM"/>
    <property type="resolution" value="3.60 A"/>
    <property type="chains" value="y=2-57"/>
</dbReference>
<dbReference type="PDB" id="5NWY">
    <property type="method" value="EM"/>
    <property type="resolution" value="2.93 A"/>
    <property type="chains" value="n=1-57"/>
</dbReference>
<dbReference type="PDB" id="5O2R">
    <property type="method" value="EM"/>
    <property type="resolution" value="3.40 A"/>
    <property type="chains" value="0=2-57"/>
</dbReference>
<dbReference type="PDB" id="5U4I">
    <property type="method" value="EM"/>
    <property type="resolution" value="3.50 A"/>
    <property type="chains" value="1=1-57"/>
</dbReference>
<dbReference type="PDB" id="5U9F">
    <property type="method" value="EM"/>
    <property type="resolution" value="3.20 A"/>
    <property type="chains" value="30=1-57"/>
</dbReference>
<dbReference type="PDB" id="5U9G">
    <property type="method" value="EM"/>
    <property type="resolution" value="3.20 A"/>
    <property type="chains" value="30=1-57"/>
</dbReference>
<dbReference type="PDB" id="5UYK">
    <property type="method" value="EM"/>
    <property type="resolution" value="3.90 A"/>
    <property type="chains" value="30=2-57"/>
</dbReference>
<dbReference type="PDB" id="5UYL">
    <property type="method" value="EM"/>
    <property type="resolution" value="3.60 A"/>
    <property type="chains" value="30=2-57"/>
</dbReference>
<dbReference type="PDB" id="5UYM">
    <property type="method" value="EM"/>
    <property type="resolution" value="3.20 A"/>
    <property type="chains" value="30=2-57"/>
</dbReference>
<dbReference type="PDB" id="5UYN">
    <property type="method" value="EM"/>
    <property type="resolution" value="4.00 A"/>
    <property type="chains" value="30=2-57"/>
</dbReference>
<dbReference type="PDB" id="5UYP">
    <property type="method" value="EM"/>
    <property type="resolution" value="3.90 A"/>
    <property type="chains" value="30=2-57"/>
</dbReference>
<dbReference type="PDB" id="5UYQ">
    <property type="method" value="EM"/>
    <property type="resolution" value="3.80 A"/>
    <property type="chains" value="30=2-57"/>
</dbReference>
<dbReference type="PDB" id="5WDT">
    <property type="method" value="EM"/>
    <property type="resolution" value="3.00 A"/>
    <property type="chains" value="0=2-56"/>
</dbReference>
<dbReference type="PDB" id="5WE4">
    <property type="method" value="EM"/>
    <property type="resolution" value="3.10 A"/>
    <property type="chains" value="0=2-56"/>
</dbReference>
<dbReference type="PDB" id="5WE6">
    <property type="method" value="EM"/>
    <property type="resolution" value="3.40 A"/>
    <property type="chains" value="0=2-56"/>
</dbReference>
<dbReference type="PDB" id="5WF0">
    <property type="method" value="EM"/>
    <property type="resolution" value="3.60 A"/>
    <property type="chains" value="0=2-56"/>
</dbReference>
<dbReference type="PDB" id="5WFK">
    <property type="method" value="EM"/>
    <property type="resolution" value="3.40 A"/>
    <property type="chains" value="0=2-56"/>
</dbReference>
<dbReference type="PDB" id="5WFS">
    <property type="method" value="EM"/>
    <property type="resolution" value="3.00 A"/>
    <property type="chains" value="0=2-56"/>
</dbReference>
<dbReference type="PDB" id="6BU8">
    <property type="method" value="EM"/>
    <property type="resolution" value="3.50 A"/>
    <property type="chains" value="30=2-57"/>
</dbReference>
<dbReference type="PDB" id="6BY1">
    <property type="method" value="X-ray"/>
    <property type="resolution" value="3.94 A"/>
    <property type="chains" value="C1/D1=2-57"/>
</dbReference>
<dbReference type="PDB" id="6C4I">
    <property type="method" value="EM"/>
    <property type="resolution" value="3.24 A"/>
    <property type="chains" value="2=1-57"/>
</dbReference>
<dbReference type="PDB" id="6DNC">
    <property type="method" value="EM"/>
    <property type="resolution" value="3.70 A"/>
    <property type="chains" value="FA=1-57"/>
</dbReference>
<dbReference type="PDB" id="6ENF">
    <property type="method" value="EM"/>
    <property type="resolution" value="3.20 A"/>
    <property type="chains" value="0=2-57"/>
</dbReference>
<dbReference type="PDB" id="6ENJ">
    <property type="method" value="EM"/>
    <property type="resolution" value="3.70 A"/>
    <property type="chains" value="0=2-57"/>
</dbReference>
<dbReference type="PDB" id="6ENU">
    <property type="method" value="EM"/>
    <property type="resolution" value="3.10 A"/>
    <property type="chains" value="0=2-57"/>
</dbReference>
<dbReference type="PDB" id="6GBZ">
    <property type="method" value="EM"/>
    <property type="resolution" value="3.80 A"/>
    <property type="chains" value="0=2-57"/>
</dbReference>
<dbReference type="PDB" id="6GC0">
    <property type="method" value="EM"/>
    <property type="resolution" value="3.80 A"/>
    <property type="chains" value="0=2-57"/>
</dbReference>
<dbReference type="PDB" id="6GC4">
    <property type="method" value="EM"/>
    <property type="resolution" value="4.30 A"/>
    <property type="chains" value="0=2-57"/>
</dbReference>
<dbReference type="PDB" id="6GC6">
    <property type="method" value="EM"/>
    <property type="resolution" value="4.30 A"/>
    <property type="chains" value="0=2-57"/>
</dbReference>
<dbReference type="PDB" id="6GC7">
    <property type="method" value="EM"/>
    <property type="resolution" value="4.30 A"/>
    <property type="chains" value="0=2-57"/>
</dbReference>
<dbReference type="PDB" id="6GC8">
    <property type="method" value="EM"/>
    <property type="resolution" value="3.80 A"/>
    <property type="chains" value="0=2-57"/>
</dbReference>
<dbReference type="PDB" id="6GWT">
    <property type="method" value="EM"/>
    <property type="resolution" value="3.80 A"/>
    <property type="chains" value="0=2-57"/>
</dbReference>
<dbReference type="PDB" id="6GXM">
    <property type="method" value="EM"/>
    <property type="resolution" value="3.80 A"/>
    <property type="chains" value="0=2-57"/>
</dbReference>
<dbReference type="PDB" id="6GXN">
    <property type="method" value="EM"/>
    <property type="resolution" value="3.90 A"/>
    <property type="chains" value="0=2-57"/>
</dbReference>
<dbReference type="PDB" id="6GXO">
    <property type="method" value="EM"/>
    <property type="resolution" value="3.90 A"/>
    <property type="chains" value="0=2-57"/>
</dbReference>
<dbReference type="PDB" id="6GXP">
    <property type="method" value="EM"/>
    <property type="resolution" value="4.40 A"/>
    <property type="chains" value="0=2-57"/>
</dbReference>
<dbReference type="PDB" id="6H4N">
    <property type="method" value="EM"/>
    <property type="resolution" value="3.00 A"/>
    <property type="chains" value="0=2-57"/>
</dbReference>
<dbReference type="PDB" id="6H58">
    <property type="method" value="EM"/>
    <property type="resolution" value="7.90 A"/>
    <property type="chains" value="0/00=2-57"/>
</dbReference>
<dbReference type="PDB" id="6HRM">
    <property type="method" value="EM"/>
    <property type="resolution" value="2.96 A"/>
    <property type="chains" value="b=2-57"/>
</dbReference>
<dbReference type="PDB" id="6I0Y">
    <property type="method" value="EM"/>
    <property type="resolution" value="3.20 A"/>
    <property type="chains" value="0=1-57"/>
</dbReference>
<dbReference type="PDB" id="6I7V">
    <property type="method" value="X-ray"/>
    <property type="resolution" value="2.90 A"/>
    <property type="chains" value="C1/D1=2-57"/>
</dbReference>
<dbReference type="PDB" id="6O9J">
    <property type="method" value="EM"/>
    <property type="resolution" value="3.90 A"/>
    <property type="chains" value="1=2-57"/>
</dbReference>
<dbReference type="PDB" id="6O9K">
    <property type="method" value="EM"/>
    <property type="resolution" value="4.00 A"/>
    <property type="chains" value="5=2-57"/>
</dbReference>
<dbReference type="PDB" id="6OFX">
    <property type="method" value="EM"/>
    <property type="resolution" value="3.30 A"/>
    <property type="chains" value="B=2-57"/>
</dbReference>
<dbReference type="PDB" id="6OG7">
    <property type="method" value="EM"/>
    <property type="resolution" value="3.30 A"/>
    <property type="chains" value="B=2-57"/>
</dbReference>
<dbReference type="PDB" id="6OGF">
    <property type="method" value="EM"/>
    <property type="resolution" value="3.90 A"/>
    <property type="chains" value="B=1-57"/>
</dbReference>
<dbReference type="PDB" id="6OGG">
    <property type="method" value="EM"/>
    <property type="resolution" value="4.20 A"/>
    <property type="chains" value="B=1-57"/>
</dbReference>
<dbReference type="PDB" id="6OGI">
    <property type="method" value="EM"/>
    <property type="resolution" value="3.40 A"/>
    <property type="chains" value="B=1-57"/>
</dbReference>
<dbReference type="PDB" id="6OM6">
    <property type="method" value="EM"/>
    <property type="resolution" value="3.10 A"/>
    <property type="chains" value="b=1-57"/>
</dbReference>
<dbReference type="PDB" id="6ORE">
    <property type="method" value="EM"/>
    <property type="resolution" value="2.90 A"/>
    <property type="chains" value="b=2-57"/>
</dbReference>
<dbReference type="PDB" id="6ORL">
    <property type="method" value="EM"/>
    <property type="resolution" value="3.50 A"/>
    <property type="chains" value="b=2-57"/>
</dbReference>
<dbReference type="PDB" id="6OSK">
    <property type="method" value="EM"/>
    <property type="resolution" value="3.60 A"/>
    <property type="chains" value="b=2-57"/>
</dbReference>
<dbReference type="PDB" id="6OSQ">
    <property type="method" value="EM"/>
    <property type="resolution" value="3.50 A"/>
    <property type="chains" value="b=2-57"/>
</dbReference>
<dbReference type="PDB" id="6OST">
    <property type="method" value="EM"/>
    <property type="resolution" value="4.20 A"/>
    <property type="chains" value="b=2-57"/>
</dbReference>
<dbReference type="PDB" id="6OT3">
    <property type="method" value="EM"/>
    <property type="resolution" value="3.90 A"/>
    <property type="chains" value="b=2-57"/>
</dbReference>
<dbReference type="PDB" id="6OUO">
    <property type="method" value="EM"/>
    <property type="resolution" value="3.70 A"/>
    <property type="chains" value="b=2-57"/>
</dbReference>
<dbReference type="PDB" id="6PJ6">
    <property type="method" value="EM"/>
    <property type="resolution" value="2.20 A"/>
    <property type="chains" value="i=2-57"/>
</dbReference>
<dbReference type="PDB" id="6Q98">
    <property type="method" value="EM"/>
    <property type="resolution" value="4.30 A"/>
    <property type="chains" value="b=1-57"/>
</dbReference>
<dbReference type="PDB" id="6Q9A">
    <property type="method" value="EM"/>
    <property type="resolution" value="3.70 A"/>
    <property type="chains" value="b=2-56"/>
</dbReference>
<dbReference type="PDB" id="6QDW">
    <property type="method" value="EM"/>
    <property type="resolution" value="2.83 A"/>
    <property type="chains" value="3=1-57"/>
</dbReference>
<dbReference type="PDB" id="6QUL">
    <property type="method" value="EM"/>
    <property type="resolution" value="3.00 A"/>
    <property type="chains" value="b=1-57"/>
</dbReference>
<dbReference type="PDB" id="6S0K">
    <property type="method" value="EM"/>
    <property type="resolution" value="3.10 A"/>
    <property type="chains" value="b=1-57"/>
</dbReference>
<dbReference type="PDB" id="6SZS">
    <property type="method" value="EM"/>
    <property type="resolution" value="3.06 A"/>
    <property type="chains" value="0=1-57"/>
</dbReference>
<dbReference type="PDB" id="6TBV">
    <property type="method" value="EM"/>
    <property type="resolution" value="2.70 A"/>
    <property type="chains" value="L321=1-57"/>
</dbReference>
<dbReference type="PDB" id="6TC3">
    <property type="method" value="EM"/>
    <property type="resolution" value="2.70 A"/>
    <property type="chains" value="L321=1-57"/>
</dbReference>
<dbReference type="PDB" id="6U48">
    <property type="method" value="EM"/>
    <property type="resolution" value="2.87 A"/>
    <property type="chains" value="C1=2-57"/>
</dbReference>
<dbReference type="PDB" id="6VU3">
    <property type="method" value="EM"/>
    <property type="resolution" value="3.70 A"/>
    <property type="chains" value="i=2-57"/>
</dbReference>
<dbReference type="PDB" id="6VYQ">
    <property type="method" value="EM"/>
    <property type="resolution" value="3.70 A"/>
    <property type="chains" value="i=1-57"/>
</dbReference>
<dbReference type="PDB" id="6VYR">
    <property type="method" value="EM"/>
    <property type="resolution" value="3.80 A"/>
    <property type="chains" value="i=1-57"/>
</dbReference>
<dbReference type="PDB" id="6VYS">
    <property type="method" value="EM"/>
    <property type="resolution" value="3.70 A"/>
    <property type="chains" value="i=1-57"/>
</dbReference>
<dbReference type="PDB" id="6VYT">
    <property type="method" value="EM"/>
    <property type="resolution" value="14.00 A"/>
    <property type="chains" value="i=1-57"/>
</dbReference>
<dbReference type="PDB" id="6VYU">
    <property type="method" value="EM"/>
    <property type="resolution" value="7.00 A"/>
    <property type="chains" value="i=1-57"/>
</dbReference>
<dbReference type="PDB" id="6VYW">
    <property type="method" value="EM"/>
    <property type="resolution" value="7.00 A"/>
    <property type="chains" value="i=1-57"/>
</dbReference>
<dbReference type="PDB" id="6VYX">
    <property type="method" value="EM"/>
    <property type="resolution" value="9.90 A"/>
    <property type="chains" value="i=1-57"/>
</dbReference>
<dbReference type="PDB" id="6VYY">
    <property type="method" value="EM"/>
    <property type="resolution" value="9.90 A"/>
    <property type="chains" value="i=1-57"/>
</dbReference>
<dbReference type="PDB" id="6VYZ">
    <property type="method" value="EM"/>
    <property type="resolution" value="9.90 A"/>
    <property type="chains" value="i=1-57"/>
</dbReference>
<dbReference type="PDB" id="6VZ2">
    <property type="method" value="EM"/>
    <property type="resolution" value="10.00 A"/>
    <property type="chains" value="i=2-57"/>
</dbReference>
<dbReference type="PDB" id="6VZ3">
    <property type="method" value="EM"/>
    <property type="resolution" value="8.90 A"/>
    <property type="chains" value="i=2-57"/>
</dbReference>
<dbReference type="PDB" id="6VZ5">
    <property type="method" value="EM"/>
    <property type="resolution" value="8.90 A"/>
    <property type="chains" value="i=1-57"/>
</dbReference>
<dbReference type="PDB" id="6VZ7">
    <property type="method" value="EM"/>
    <property type="resolution" value="7.00 A"/>
    <property type="chains" value="i=2-57"/>
</dbReference>
<dbReference type="PDB" id="6VZJ">
    <property type="method" value="EM"/>
    <property type="resolution" value="4.10 A"/>
    <property type="chains" value="i=2-57"/>
</dbReference>
<dbReference type="PDB" id="6WD0">
    <property type="method" value="EM"/>
    <property type="resolution" value="3.00 A"/>
    <property type="chains" value="B=2-57"/>
</dbReference>
<dbReference type="PDB" id="6WD1">
    <property type="method" value="EM"/>
    <property type="resolution" value="3.30 A"/>
    <property type="chains" value="B=2-57"/>
</dbReference>
<dbReference type="PDB" id="6WD2">
    <property type="method" value="EM"/>
    <property type="resolution" value="3.60 A"/>
    <property type="chains" value="B=2-57"/>
</dbReference>
<dbReference type="PDB" id="6WD3">
    <property type="method" value="EM"/>
    <property type="resolution" value="3.60 A"/>
    <property type="chains" value="B=2-57"/>
</dbReference>
<dbReference type="PDB" id="6WD4">
    <property type="method" value="EM"/>
    <property type="resolution" value="3.70 A"/>
    <property type="chains" value="B=2-57"/>
</dbReference>
<dbReference type="PDB" id="6WD5">
    <property type="method" value="EM"/>
    <property type="resolution" value="3.60 A"/>
    <property type="chains" value="B=2-57"/>
</dbReference>
<dbReference type="PDB" id="6WD6">
    <property type="method" value="EM"/>
    <property type="resolution" value="3.70 A"/>
    <property type="chains" value="B=2-57"/>
</dbReference>
<dbReference type="PDB" id="6WD7">
    <property type="method" value="EM"/>
    <property type="resolution" value="3.90 A"/>
    <property type="chains" value="B=2-57"/>
</dbReference>
<dbReference type="PDB" id="6WD8">
    <property type="method" value="EM"/>
    <property type="resolution" value="3.70 A"/>
    <property type="chains" value="B=2-57"/>
</dbReference>
<dbReference type="PDB" id="6WD9">
    <property type="method" value="EM"/>
    <property type="resolution" value="3.70 A"/>
    <property type="chains" value="B=2-57"/>
</dbReference>
<dbReference type="PDB" id="6WDA">
    <property type="method" value="EM"/>
    <property type="resolution" value="3.80 A"/>
    <property type="chains" value="B=2-57"/>
</dbReference>
<dbReference type="PDB" id="6WDB">
    <property type="method" value="EM"/>
    <property type="resolution" value="4.00 A"/>
    <property type="chains" value="B=2-57"/>
</dbReference>
<dbReference type="PDB" id="6WDC">
    <property type="method" value="EM"/>
    <property type="resolution" value="4.20 A"/>
    <property type="chains" value="B=2-57"/>
</dbReference>
<dbReference type="PDB" id="6WDD">
    <property type="method" value="EM"/>
    <property type="resolution" value="3.20 A"/>
    <property type="chains" value="B=2-57"/>
</dbReference>
<dbReference type="PDB" id="6WDE">
    <property type="method" value="EM"/>
    <property type="resolution" value="3.00 A"/>
    <property type="chains" value="B=2-57"/>
</dbReference>
<dbReference type="PDB" id="6WDF">
    <property type="method" value="EM"/>
    <property type="resolution" value="3.30 A"/>
    <property type="chains" value="B=2-57"/>
</dbReference>
<dbReference type="PDB" id="6WDG">
    <property type="method" value="EM"/>
    <property type="resolution" value="3.30 A"/>
    <property type="chains" value="B=2-57"/>
</dbReference>
<dbReference type="PDB" id="6WDH">
    <property type="method" value="EM"/>
    <property type="resolution" value="4.30 A"/>
    <property type="chains" value="B=2-57"/>
</dbReference>
<dbReference type="PDB" id="6WDI">
    <property type="method" value="EM"/>
    <property type="resolution" value="4.00 A"/>
    <property type="chains" value="B=2-57"/>
</dbReference>
<dbReference type="PDB" id="6WDJ">
    <property type="method" value="EM"/>
    <property type="resolution" value="3.70 A"/>
    <property type="chains" value="B=2-57"/>
</dbReference>
<dbReference type="PDB" id="6WDK">
    <property type="method" value="EM"/>
    <property type="resolution" value="3.60 A"/>
    <property type="chains" value="B=2-57"/>
</dbReference>
<dbReference type="PDB" id="6WDL">
    <property type="method" value="EM"/>
    <property type="resolution" value="3.70 A"/>
    <property type="chains" value="B=2-57"/>
</dbReference>
<dbReference type="PDB" id="6WDM">
    <property type="method" value="EM"/>
    <property type="resolution" value="3.60 A"/>
    <property type="chains" value="B=2-57"/>
</dbReference>
<dbReference type="PDB" id="6WNT">
    <property type="method" value="EM"/>
    <property type="resolution" value="3.10 A"/>
    <property type="chains" value="B=2-57"/>
</dbReference>
<dbReference type="PDB" id="6WNV">
    <property type="method" value="EM"/>
    <property type="resolution" value="3.50 A"/>
    <property type="chains" value="B=2-57"/>
</dbReference>
<dbReference type="PDB" id="6WNW">
    <property type="method" value="EM"/>
    <property type="resolution" value="3.20 A"/>
    <property type="chains" value="B=2-57"/>
</dbReference>
<dbReference type="PDB" id="6X6T">
    <property type="method" value="EM"/>
    <property type="resolution" value="3.20 A"/>
    <property type="chains" value="i=1-57"/>
</dbReference>
<dbReference type="PDB" id="6X7F">
    <property type="method" value="EM"/>
    <property type="resolution" value="3.50 A"/>
    <property type="chains" value="i=1-57"/>
</dbReference>
<dbReference type="PDB" id="6X7K">
    <property type="method" value="EM"/>
    <property type="resolution" value="3.10 A"/>
    <property type="chains" value="i=1-57"/>
</dbReference>
<dbReference type="PDB" id="6X9Q">
    <property type="method" value="EM"/>
    <property type="resolution" value="4.80 A"/>
    <property type="chains" value="i=1-57"/>
</dbReference>
<dbReference type="PDB" id="6XDQ">
    <property type="method" value="EM"/>
    <property type="resolution" value="3.70 A"/>
    <property type="chains" value="i=1-57"/>
</dbReference>
<dbReference type="PDB" id="6XDR">
    <property type="method" value="EM"/>
    <property type="resolution" value="4.70 A"/>
    <property type="chains" value="i=1-57"/>
</dbReference>
<dbReference type="PDB" id="6XGF">
    <property type="method" value="EM"/>
    <property type="resolution" value="5.00 A"/>
    <property type="chains" value="i=1-57"/>
</dbReference>
<dbReference type="PDB" id="6XII">
    <property type="method" value="EM"/>
    <property type="resolution" value="7.00 A"/>
    <property type="chains" value="i=1-57"/>
</dbReference>
<dbReference type="PDB" id="6XIJ">
    <property type="method" value="EM"/>
    <property type="resolution" value="8.00 A"/>
    <property type="chains" value="i=1-57"/>
</dbReference>
<dbReference type="PDB" id="6XZ7">
    <property type="method" value="EM"/>
    <property type="resolution" value="2.10 A"/>
    <property type="chains" value="a=2-57"/>
</dbReference>
<dbReference type="PDB" id="6XZA">
    <property type="method" value="EM"/>
    <property type="resolution" value="2.66 A"/>
    <property type="chains" value="a2=2-57"/>
</dbReference>
<dbReference type="PDB" id="6XZB">
    <property type="method" value="EM"/>
    <property type="resolution" value="2.54 A"/>
    <property type="chains" value="a2=2-57"/>
</dbReference>
<dbReference type="PDB" id="6Y69">
    <property type="method" value="EM"/>
    <property type="resolution" value="2.86 A"/>
    <property type="chains" value="0=2-57"/>
</dbReference>
<dbReference type="PDB" id="6YS3">
    <property type="method" value="EM"/>
    <property type="resolution" value="2.58 A"/>
    <property type="chains" value="3=1-57"/>
</dbReference>
<dbReference type="PDB" id="6YSR">
    <property type="method" value="EM"/>
    <property type="resolution" value="3.10 A"/>
    <property type="chains" value="0=1-57"/>
</dbReference>
<dbReference type="PDB" id="6YSS">
    <property type="method" value="EM"/>
    <property type="resolution" value="2.60 A"/>
    <property type="chains" value="0=1-57"/>
</dbReference>
<dbReference type="PDB" id="6YST">
    <property type="method" value="EM"/>
    <property type="resolution" value="3.20 A"/>
    <property type="chains" value="0=1-57"/>
</dbReference>
<dbReference type="PDB" id="6YSU">
    <property type="method" value="EM"/>
    <property type="resolution" value="3.70 A"/>
    <property type="chains" value="0=1-57"/>
</dbReference>
<dbReference type="PDB" id="6ZTJ">
    <property type="method" value="EM"/>
    <property type="resolution" value="3.40 A"/>
    <property type="chains" value="B2=1-57"/>
</dbReference>
<dbReference type="PDB" id="6ZTL">
    <property type="method" value="EM"/>
    <property type="resolution" value="3.50 A"/>
    <property type="chains" value="B2=1-57"/>
</dbReference>
<dbReference type="PDB" id="6ZTM">
    <property type="method" value="EM"/>
    <property type="resolution" value="3.30 A"/>
    <property type="chains" value="B2=1-57"/>
</dbReference>
<dbReference type="PDB" id="6ZTN">
    <property type="method" value="EM"/>
    <property type="resolution" value="3.90 A"/>
    <property type="chains" value="B2=1-57"/>
</dbReference>
<dbReference type="PDB" id="6ZTO">
    <property type="method" value="EM"/>
    <property type="resolution" value="3.00 A"/>
    <property type="chains" value="B2=1-57"/>
</dbReference>
<dbReference type="PDB" id="6ZTP">
    <property type="method" value="EM"/>
    <property type="resolution" value="3.00 A"/>
    <property type="chains" value="B2=1-57"/>
</dbReference>
<dbReference type="PDB" id="6ZU1">
    <property type="method" value="EM"/>
    <property type="resolution" value="3.00 A"/>
    <property type="chains" value="B2=1-57"/>
</dbReference>
<dbReference type="PDB" id="7ABZ">
    <property type="method" value="EM"/>
    <property type="resolution" value="3.21 A"/>
    <property type="chains" value="b=2-57"/>
</dbReference>
<dbReference type="PDB" id="7AC7">
    <property type="method" value="EM"/>
    <property type="resolution" value="3.08 A"/>
    <property type="chains" value="b=2-55"/>
</dbReference>
<dbReference type="PDB" id="7ACJ">
    <property type="method" value="EM"/>
    <property type="resolution" value="3.20 A"/>
    <property type="chains" value="b=2-57"/>
</dbReference>
<dbReference type="PDB" id="7ACR">
    <property type="method" value="EM"/>
    <property type="resolution" value="3.44 A"/>
    <property type="chains" value="b=2-57"/>
</dbReference>
<dbReference type="PDB" id="7B5K">
    <property type="method" value="EM"/>
    <property type="resolution" value="2.90 A"/>
    <property type="chains" value="0=2-57"/>
</dbReference>
<dbReference type="PDB" id="7BL2">
    <property type="method" value="EM"/>
    <property type="resolution" value="3.70 A"/>
    <property type="chains" value="0=1-57"/>
</dbReference>
<dbReference type="PDB" id="7BL3">
    <property type="method" value="EM"/>
    <property type="resolution" value="3.50 A"/>
    <property type="chains" value="0=1-57"/>
</dbReference>
<dbReference type="PDB" id="7BL4">
    <property type="method" value="EM"/>
    <property type="resolution" value="2.40 A"/>
    <property type="chains" value="0=1-57"/>
</dbReference>
<dbReference type="PDB" id="7BL5">
    <property type="method" value="EM"/>
    <property type="resolution" value="3.30 A"/>
    <property type="chains" value="0=1-57"/>
</dbReference>
<dbReference type="PDB" id="7BL6">
    <property type="method" value="EM"/>
    <property type="resolution" value="4.00 A"/>
    <property type="chains" value="0=1-57"/>
</dbReference>
<dbReference type="PDB" id="7BV8">
    <property type="method" value="EM"/>
    <property type="resolution" value="3.14 A"/>
    <property type="chains" value="b=1-57"/>
</dbReference>
<dbReference type="PDB" id="7D6Z">
    <property type="method" value="EM"/>
    <property type="resolution" value="3.40 A"/>
    <property type="chains" value="a=1-57"/>
</dbReference>
<dbReference type="PDB" id="7D80">
    <property type="method" value="EM"/>
    <property type="resolution" value="4.10 A"/>
    <property type="chains" value="6=1-57"/>
</dbReference>
<dbReference type="PDB" id="7JSS">
    <property type="method" value="EM"/>
    <property type="resolution" value="3.70 A"/>
    <property type="chains" value="B=2-57"/>
</dbReference>
<dbReference type="PDB" id="7JSW">
    <property type="method" value="EM"/>
    <property type="resolution" value="3.80 A"/>
    <property type="chains" value="B=2-57"/>
</dbReference>
<dbReference type="PDB" id="7JSZ">
    <property type="method" value="EM"/>
    <property type="resolution" value="3.70 A"/>
    <property type="chains" value="B=2-57"/>
</dbReference>
<dbReference type="PDB" id="7JT1">
    <property type="method" value="EM"/>
    <property type="resolution" value="3.30 A"/>
    <property type="chains" value="B=2-57"/>
</dbReference>
<dbReference type="PDB" id="7JT2">
    <property type="method" value="EM"/>
    <property type="resolution" value="3.50 A"/>
    <property type="chains" value="B=2-57"/>
</dbReference>
<dbReference type="PDB" id="7JT3">
    <property type="method" value="EM"/>
    <property type="resolution" value="3.70 A"/>
    <property type="chains" value="B=2-57"/>
</dbReference>
<dbReference type="PDB" id="7K00">
    <property type="method" value="EM"/>
    <property type="resolution" value="1.98 A"/>
    <property type="chains" value="z=1-57"/>
</dbReference>
<dbReference type="PDB" id="7K50">
    <property type="method" value="EM"/>
    <property type="resolution" value="3.40 A"/>
    <property type="chains" value="B=2-57"/>
</dbReference>
<dbReference type="PDB" id="7K51">
    <property type="method" value="EM"/>
    <property type="resolution" value="3.50 A"/>
    <property type="chains" value="B=2-57"/>
</dbReference>
<dbReference type="PDB" id="7K52">
    <property type="method" value="EM"/>
    <property type="resolution" value="3.40 A"/>
    <property type="chains" value="B=2-57"/>
</dbReference>
<dbReference type="PDB" id="7K53">
    <property type="method" value="EM"/>
    <property type="resolution" value="3.20 A"/>
    <property type="chains" value="B=2-57"/>
</dbReference>
<dbReference type="PDB" id="7K54">
    <property type="method" value="EM"/>
    <property type="resolution" value="3.20 A"/>
    <property type="chains" value="B=2-57"/>
</dbReference>
<dbReference type="PDB" id="7K55">
    <property type="method" value="EM"/>
    <property type="resolution" value="3.30 A"/>
    <property type="chains" value="B=2-57"/>
</dbReference>
<dbReference type="PDB" id="7LV0">
    <property type="method" value="EM"/>
    <property type="resolution" value="3.20 A"/>
    <property type="chains" value="B=2-57"/>
</dbReference>
<dbReference type="PDB" id="7LVK">
    <property type="method" value="EM"/>
    <property type="resolution" value="2.20 A"/>
    <property type="chains" value="i=1-57"/>
</dbReference>
<dbReference type="PDB" id="7M5D">
    <property type="method" value="EM"/>
    <property type="resolution" value="2.80 A"/>
    <property type="chains" value="b=2-57"/>
</dbReference>
<dbReference type="PDB" id="7N1P">
    <property type="method" value="EM"/>
    <property type="resolution" value="2.33 A"/>
    <property type="chains" value="Lf=1-57"/>
</dbReference>
<dbReference type="PDB" id="7N2C">
    <property type="method" value="EM"/>
    <property type="resolution" value="2.72 A"/>
    <property type="chains" value="Lf=1-57"/>
</dbReference>
<dbReference type="PDB" id="7N2U">
    <property type="method" value="EM"/>
    <property type="resolution" value="2.53 A"/>
    <property type="chains" value="Lf=1-57"/>
</dbReference>
<dbReference type="PDB" id="7N2V">
    <property type="method" value="EM"/>
    <property type="resolution" value="2.54 A"/>
    <property type="chains" value="Lf=1-57"/>
</dbReference>
<dbReference type="PDB" id="7N30">
    <property type="method" value="EM"/>
    <property type="resolution" value="2.66 A"/>
    <property type="chains" value="Lf=1-57"/>
</dbReference>
<dbReference type="PDB" id="7N31">
    <property type="method" value="EM"/>
    <property type="resolution" value="2.69 A"/>
    <property type="chains" value="Lf=1-57"/>
</dbReference>
<dbReference type="PDB" id="7NBU">
    <property type="method" value="EM"/>
    <property type="resolution" value="3.11 A"/>
    <property type="chains" value="z=2-57"/>
</dbReference>
<dbReference type="PDB" id="7NWT">
    <property type="method" value="EM"/>
    <property type="resolution" value="2.66 A"/>
    <property type="chains" value="b=1-57"/>
</dbReference>
<dbReference type="PDB" id="7O19">
    <property type="method" value="EM"/>
    <property type="resolution" value="2.90 A"/>
    <property type="chains" value="B0=1-57"/>
</dbReference>
<dbReference type="PDB" id="7O1A">
    <property type="method" value="EM"/>
    <property type="resolution" value="2.40 A"/>
    <property type="chains" value="B0=1-57"/>
</dbReference>
<dbReference type="PDB" id="7O1C">
    <property type="method" value="EM"/>
    <property type="resolution" value="2.60 A"/>
    <property type="chains" value="B0=1-57"/>
</dbReference>
<dbReference type="PDB" id="7ODE">
    <property type="method" value="EM"/>
    <property type="resolution" value="2.84 A"/>
    <property type="chains" value="i=1-57"/>
</dbReference>
<dbReference type="PDB" id="7OIZ">
    <property type="method" value="EM"/>
    <property type="resolution" value="2.90 A"/>
    <property type="chains" value="z=1-57"/>
</dbReference>
<dbReference type="PDB" id="7OJ0">
    <property type="method" value="EM"/>
    <property type="resolution" value="3.50 A"/>
    <property type="chains" value="z=1-57"/>
</dbReference>
<dbReference type="PDB" id="7P3K">
    <property type="method" value="EM"/>
    <property type="resolution" value="2.90 A"/>
    <property type="chains" value="z=1-57"/>
</dbReference>
<dbReference type="PDB" id="7PJS">
    <property type="method" value="EM"/>
    <property type="resolution" value="2.35 A"/>
    <property type="chains" value="0=1-57"/>
</dbReference>
<dbReference type="PDB" id="7PJT">
    <property type="method" value="EM"/>
    <property type="resolution" value="6.00 A"/>
    <property type="chains" value="0=1-57"/>
</dbReference>
<dbReference type="PDB" id="7PJU">
    <property type="method" value="EM"/>
    <property type="resolution" value="9.50 A"/>
    <property type="chains" value="0=1-57"/>
</dbReference>
<dbReference type="PDB" id="7PJV">
    <property type="method" value="EM"/>
    <property type="resolution" value="3.10 A"/>
    <property type="chains" value="0=1-57"/>
</dbReference>
<dbReference type="PDB" id="7PJW">
    <property type="method" value="EM"/>
    <property type="resolution" value="4.00 A"/>
    <property type="chains" value="0=1-57"/>
</dbReference>
<dbReference type="PDB" id="7PJX">
    <property type="method" value="EM"/>
    <property type="resolution" value="6.50 A"/>
    <property type="chains" value="0=1-57"/>
</dbReference>
<dbReference type="PDB" id="7PJY">
    <property type="method" value="EM"/>
    <property type="resolution" value="3.10 A"/>
    <property type="chains" value="0=1-57"/>
</dbReference>
<dbReference type="PDB" id="7PJZ">
    <property type="method" value="EM"/>
    <property type="resolution" value="6.00 A"/>
    <property type="chains" value="0=1-57"/>
</dbReference>
<dbReference type="PDB" id="7Q4K">
    <property type="method" value="EM"/>
    <property type="resolution" value="3.00 A"/>
    <property type="chains" value="B0=1-57"/>
</dbReference>
<dbReference type="PDB" id="7QG8">
    <property type="method" value="EM"/>
    <property type="resolution" value="3.97 A"/>
    <property type="chains" value="n=1-57"/>
</dbReference>
<dbReference type="PDB" id="7QGH">
    <property type="method" value="EM"/>
    <property type="resolution" value="4.48 A"/>
    <property type="chains" value="n=1-57"/>
</dbReference>
<dbReference type="PDB" id="7QGN">
    <property type="method" value="EM"/>
    <property type="resolution" value="3.37 A"/>
    <property type="chains" value="n=1-57"/>
</dbReference>
<dbReference type="PDB" id="7QGR">
    <property type="method" value="EM"/>
    <property type="resolution" value="5.70 A"/>
    <property type="chains" value="n=1-57"/>
</dbReference>
<dbReference type="PDB" id="7QQ3">
    <property type="method" value="EM"/>
    <property type="resolution" value="2.10 A"/>
    <property type="chains" value="i=1-57"/>
</dbReference>
<dbReference type="PDB" id="7S1G">
    <property type="method" value="EM"/>
    <property type="resolution" value="2.48 A"/>
    <property type="chains" value="i=1-57"/>
</dbReference>
<dbReference type="PDB" id="7S1H">
    <property type="method" value="EM"/>
    <property type="resolution" value="2.35 A"/>
    <property type="chains" value="i=1-57"/>
</dbReference>
<dbReference type="PDB" id="7S1I">
    <property type="method" value="EM"/>
    <property type="resolution" value="2.48 A"/>
    <property type="chains" value="i=1-57"/>
</dbReference>
<dbReference type="PDB" id="7S1J">
    <property type="method" value="EM"/>
    <property type="resolution" value="2.47 A"/>
    <property type="chains" value="i=1-57"/>
</dbReference>
<dbReference type="PDB" id="7S1K">
    <property type="method" value="EM"/>
    <property type="resolution" value="2.42 A"/>
    <property type="chains" value="i=1-57"/>
</dbReference>
<dbReference type="PDB" id="7SA4">
    <property type="method" value="EM"/>
    <property type="resolution" value="2.55 A"/>
    <property type="chains" value="b=1-57"/>
</dbReference>
<dbReference type="PDB" id="7SS9">
    <property type="method" value="EM"/>
    <property type="resolution" value="3.90 A"/>
    <property type="chains" value="B=2-57"/>
</dbReference>
<dbReference type="PDB" id="7SSD">
    <property type="method" value="EM"/>
    <property type="resolution" value="3.30 A"/>
    <property type="chains" value="B=2-57"/>
</dbReference>
<dbReference type="PDB" id="7SSL">
    <property type="method" value="EM"/>
    <property type="resolution" value="3.80 A"/>
    <property type="chains" value="B=2-57"/>
</dbReference>
<dbReference type="PDB" id="7SSN">
    <property type="method" value="EM"/>
    <property type="resolution" value="3.20 A"/>
    <property type="chains" value="B=2-57"/>
</dbReference>
<dbReference type="PDB" id="7SSO">
    <property type="method" value="EM"/>
    <property type="resolution" value="3.20 A"/>
    <property type="chains" value="B=2-57"/>
</dbReference>
<dbReference type="PDB" id="7SSW">
    <property type="method" value="EM"/>
    <property type="resolution" value="3.80 A"/>
    <property type="chains" value="B=2-57"/>
</dbReference>
<dbReference type="PDB" id="7ST2">
    <property type="method" value="EM"/>
    <property type="resolution" value="2.90 A"/>
    <property type="chains" value="B=2-57"/>
</dbReference>
<dbReference type="PDB" id="7ST6">
    <property type="method" value="EM"/>
    <property type="resolution" value="3.00 A"/>
    <property type="chains" value="B=2-57"/>
</dbReference>
<dbReference type="PDB" id="7ST7">
    <property type="method" value="EM"/>
    <property type="resolution" value="3.20 A"/>
    <property type="chains" value="B=2-57"/>
</dbReference>
<dbReference type="PDB" id="7TOS">
    <property type="method" value="EM"/>
    <property type="resolution" value="2.90 A"/>
    <property type="chains" value="L32=2-57"/>
</dbReference>
<dbReference type="PDB" id="7UG7">
    <property type="method" value="EM"/>
    <property type="resolution" value="2.58 A"/>
    <property type="chains" value="Lf=1-57"/>
</dbReference>
<dbReference type="PDB" id="7UPH">
    <property type="method" value="EM"/>
    <property type="resolution" value="4.18 A"/>
    <property type="chains" value="i=2-57"/>
</dbReference>
<dbReference type="PDB" id="7Y7C">
    <property type="method" value="EM"/>
    <property type="resolution" value="2.51 A"/>
    <property type="chains" value="z=1-57"/>
</dbReference>
<dbReference type="PDB" id="7Y7D">
    <property type="method" value="EM"/>
    <property type="resolution" value="2.58 A"/>
    <property type="chains" value="z=1-57"/>
</dbReference>
<dbReference type="PDB" id="7Y7E">
    <property type="method" value="EM"/>
    <property type="resolution" value="2.41 A"/>
    <property type="chains" value="z=1-57"/>
</dbReference>
<dbReference type="PDB" id="7Y7F">
    <property type="method" value="EM"/>
    <property type="resolution" value="2.43 A"/>
    <property type="chains" value="z=1-57"/>
</dbReference>
<dbReference type="PDB" id="7Y7G">
    <property type="method" value="EM"/>
    <property type="resolution" value="2.34 A"/>
    <property type="chains" value="z=1-57"/>
</dbReference>
<dbReference type="PDB" id="7Y7H">
    <property type="method" value="EM"/>
    <property type="resolution" value="2.51 A"/>
    <property type="chains" value="z=1-57"/>
</dbReference>
<dbReference type="PDB" id="7Z20">
    <property type="method" value="EM"/>
    <property type="resolution" value="2.29 A"/>
    <property type="chains" value="3=1-57"/>
</dbReference>
<dbReference type="PDB" id="7ZOD">
    <property type="method" value="EM"/>
    <property type="resolution" value="2.56 A"/>
    <property type="chains" value="3=1-57"/>
</dbReference>
<dbReference type="PDB" id="7ZP8">
    <property type="method" value="EM"/>
    <property type="resolution" value="2.20 A"/>
    <property type="chains" value="3=1-57"/>
</dbReference>
<dbReference type="PDB" id="7ZQ5">
    <property type="method" value="EM"/>
    <property type="resolution" value="2.70 A"/>
    <property type="chains" value="3=1-57"/>
</dbReference>
<dbReference type="PDB" id="7ZQ6">
    <property type="method" value="EM"/>
    <property type="resolution" value="2.75 A"/>
    <property type="chains" value="3=1-57"/>
</dbReference>
<dbReference type="PDB" id="7ZTA">
    <property type="method" value="EM"/>
    <property type="resolution" value="2.70 A"/>
    <property type="chains" value="L321=2-57"/>
</dbReference>
<dbReference type="PDB" id="8A3L">
    <property type="method" value="EM"/>
    <property type="resolution" value="3.42 A"/>
    <property type="chains" value="z=1-57"/>
</dbReference>
<dbReference type="PDB" id="8AKN">
    <property type="method" value="EM"/>
    <property type="resolution" value="2.30 A"/>
    <property type="chains" value="z=1-57"/>
</dbReference>
<dbReference type="PDB" id="8AM9">
    <property type="method" value="EM"/>
    <property type="resolution" value="2.80 A"/>
    <property type="chains" value="z=1-57"/>
</dbReference>
<dbReference type="PDB" id="8ANA">
    <property type="method" value="EM"/>
    <property type="resolution" value="2.10 A"/>
    <property type="chains" value="z=1-57"/>
</dbReference>
<dbReference type="PDB" id="8AP4">
    <property type="method" value="EM"/>
    <property type="resolution" value="3.00 A"/>
    <property type="chains" value="z=1-57"/>
</dbReference>
<dbReference type="PDB" id="8AYE">
    <property type="method" value="EM"/>
    <property type="resolution" value="1.96 A"/>
    <property type="chains" value="z=1-57"/>
</dbReference>
<dbReference type="PDB" id="8B0X">
    <property type="method" value="EM"/>
    <property type="resolution" value="1.55 A"/>
    <property type="chains" value="z=1-57"/>
</dbReference>
<dbReference type="PDB" id="8B7Y">
    <property type="method" value="EM"/>
    <property type="resolution" value="3.00 A"/>
    <property type="chains" value="i=1-57"/>
</dbReference>
<dbReference type="PDB" id="8BF7">
    <property type="method" value="EM"/>
    <property type="resolution" value="2.33 A"/>
    <property type="chains" value="a=1-57"/>
</dbReference>
<dbReference type="PDB" id="8BGE">
    <property type="method" value="EM"/>
    <property type="resolution" value="2.11 A"/>
    <property type="chains" value="a=1-57"/>
</dbReference>
<dbReference type="PDB" id="8BGH">
    <property type="method" value="EM"/>
    <property type="resolution" value="2.88 A"/>
    <property type="chains" value="a=1-57"/>
</dbReference>
<dbReference type="PDB" id="8BH4">
    <property type="method" value="EM"/>
    <property type="resolution" value="2.62 A"/>
    <property type="chains" value="a=1-57"/>
</dbReference>
<dbReference type="PDB" id="8BHJ">
    <property type="method" value="EM"/>
    <property type="resolution" value="2.81 A"/>
    <property type="chains" value="a=1-57"/>
</dbReference>
<dbReference type="PDB" id="8BHL">
    <property type="method" value="EM"/>
    <property type="resolution" value="2.21 A"/>
    <property type="chains" value="a=1-57"/>
</dbReference>
<dbReference type="PDB" id="8BHN">
    <property type="method" value="EM"/>
    <property type="resolution" value="2.85 A"/>
    <property type="chains" value="a=1-57"/>
</dbReference>
<dbReference type="PDB" id="8BHP">
    <property type="method" value="EM"/>
    <property type="resolution" value="2.37 A"/>
    <property type="chains" value="a=1-57"/>
</dbReference>
<dbReference type="PDB" id="8BIL">
    <property type="method" value="EM"/>
    <property type="resolution" value="2.04 A"/>
    <property type="chains" value="a=1-57"/>
</dbReference>
<dbReference type="PDB" id="8BIM">
    <property type="method" value="EM"/>
    <property type="resolution" value="2.04 A"/>
    <property type="chains" value="a=1-57"/>
</dbReference>
<dbReference type="PDB" id="8C8X">
    <property type="method" value="EM"/>
    <property type="resolution" value="3.93 A"/>
    <property type="chains" value="0=1-57"/>
</dbReference>
<dbReference type="PDB" id="8C8Y">
    <property type="method" value="EM"/>
    <property type="resolution" value="3.03 A"/>
    <property type="chains" value="0=1-57"/>
</dbReference>
<dbReference type="PDB" id="8C8Z">
    <property type="method" value="EM"/>
    <property type="resolution" value="3.12 A"/>
    <property type="chains" value="0=1-57"/>
</dbReference>
<dbReference type="PDB" id="8C90">
    <property type="method" value="EM"/>
    <property type="resolution" value="3.15 A"/>
    <property type="chains" value="0=1-57"/>
</dbReference>
<dbReference type="PDB" id="8C91">
    <property type="method" value="EM"/>
    <property type="resolution" value="4.19 A"/>
    <property type="chains" value="0=1-57"/>
</dbReference>
<dbReference type="PDB" id="8C92">
    <property type="method" value="EM"/>
    <property type="resolution" value="3.79 A"/>
    <property type="chains" value="0=1-57"/>
</dbReference>
<dbReference type="PDB" id="8C93">
    <property type="method" value="EM"/>
    <property type="resolution" value="4.17 A"/>
    <property type="chains" value="0=1-57"/>
</dbReference>
<dbReference type="PDB" id="8C94">
    <property type="method" value="EM"/>
    <property type="resolution" value="3.80 A"/>
    <property type="chains" value="0=1-57"/>
</dbReference>
<dbReference type="PDB" id="8C96">
    <property type="method" value="EM"/>
    <property type="resolution" value="4.43 A"/>
    <property type="chains" value="0=1-57"/>
</dbReference>
<dbReference type="PDB" id="8C97">
    <property type="method" value="EM"/>
    <property type="resolution" value="4.07 A"/>
    <property type="chains" value="0=1-57"/>
</dbReference>
<dbReference type="PDB" id="8CAM">
    <property type="method" value="EM"/>
    <property type="resolution" value="1.86 A"/>
    <property type="chains" value="z=1-57"/>
</dbReference>
<dbReference type="PDB" id="8CEU">
    <property type="method" value="EM"/>
    <property type="resolution" value="1.83 A"/>
    <property type="chains" value="z=1-57"/>
</dbReference>
<dbReference type="PDB" id="8CGD">
    <property type="method" value="EM"/>
    <property type="resolution" value="1.98 A"/>
    <property type="chains" value="z=1-57"/>
</dbReference>
<dbReference type="PDB" id="8CGK">
    <property type="method" value="EM"/>
    <property type="resolution" value="1.64 A"/>
    <property type="chains" value="z=1-57"/>
</dbReference>
<dbReference type="PDB" id="8CGV">
    <property type="method" value="EM"/>
    <property type="resolution" value="1.66 A"/>
    <property type="chains" value="z=1-57"/>
</dbReference>
<dbReference type="PDB" id="8E30">
    <property type="method" value="EM"/>
    <property type="resolution" value="1.91 A"/>
    <property type="chains" value="Q=2-57"/>
</dbReference>
<dbReference type="PDB" id="8E32">
    <property type="method" value="EM"/>
    <property type="resolution" value="2.35 A"/>
    <property type="chains" value="Q=2-57"/>
</dbReference>
<dbReference type="PDB" id="8E33">
    <property type="method" value="EM"/>
    <property type="resolution" value="2.23 A"/>
    <property type="chains" value="Q=2-57"/>
</dbReference>
<dbReference type="PDB" id="8E35">
    <property type="method" value="EM"/>
    <property type="resolution" value="2.27 A"/>
    <property type="chains" value="Q=2-57"/>
</dbReference>
<dbReference type="PDB" id="8E36">
    <property type="method" value="EM"/>
    <property type="resolution" value="2.38 A"/>
    <property type="chains" value="Q=2-57"/>
</dbReference>
<dbReference type="PDB" id="8E3L">
    <property type="method" value="EM"/>
    <property type="resolution" value="2.35 A"/>
    <property type="chains" value="Q=2-57"/>
</dbReference>
<dbReference type="PDB" id="8E3M">
    <property type="method" value="EM"/>
    <property type="resolution" value="2.25 A"/>
    <property type="chains" value="Q=2-57"/>
</dbReference>
<dbReference type="PDB" id="8E3O">
    <property type="method" value="EM"/>
    <property type="resolution" value="1.99 A"/>
    <property type="chains" value="Q=2-57"/>
</dbReference>
<dbReference type="PDB" id="8E41">
    <property type="method" value="EM"/>
    <property type="resolution" value="2.13 A"/>
    <property type="chains" value="Q=2-57"/>
</dbReference>
<dbReference type="PDB" id="8E42">
    <property type="method" value="EM"/>
    <property type="resolution" value="2.29 A"/>
    <property type="chains" value="Q=2-57"/>
</dbReference>
<dbReference type="PDB" id="8E43">
    <property type="method" value="EM"/>
    <property type="resolution" value="2.09 A"/>
    <property type="chains" value="Q=2-57"/>
</dbReference>
<dbReference type="PDB" id="8E44">
    <property type="method" value="EM"/>
    <property type="resolution" value="2.53 A"/>
    <property type="chains" value="Q=2-57"/>
</dbReference>
<dbReference type="PDB" id="8E45">
    <property type="method" value="EM"/>
    <property type="resolution" value="2.30 A"/>
    <property type="chains" value="Q=2-57"/>
</dbReference>
<dbReference type="PDB" id="8E46">
    <property type="method" value="EM"/>
    <property type="resolution" value="2.32 A"/>
    <property type="chains" value="Q=2-57"/>
</dbReference>
<dbReference type="PDB" id="8E47">
    <property type="method" value="EM"/>
    <property type="resolution" value="2.32 A"/>
    <property type="chains" value="Q=2-57"/>
</dbReference>
<dbReference type="PDB" id="8E48">
    <property type="method" value="EM"/>
    <property type="resolution" value="2.27 A"/>
    <property type="chains" value="Q=2-57"/>
</dbReference>
<dbReference type="PDB" id="8E49">
    <property type="method" value="EM"/>
    <property type="resolution" value="2.05 A"/>
    <property type="chains" value="Q=2-57"/>
</dbReference>
<dbReference type="PDB" id="8EIU">
    <property type="method" value="EM"/>
    <property type="resolution" value="2.24 A"/>
    <property type="chains" value="z=1-57"/>
</dbReference>
<dbReference type="PDB" id="8EKC">
    <property type="method" value="EM"/>
    <property type="resolution" value="2.70 A"/>
    <property type="chains" value="4=1-57"/>
</dbReference>
<dbReference type="PDB" id="8EMM">
    <property type="method" value="EM"/>
    <property type="resolution" value="2.10 A"/>
    <property type="chains" value="z=1-57"/>
</dbReference>
<dbReference type="PDB" id="8FIZ">
    <property type="method" value="EM"/>
    <property type="resolution" value="3.80 A"/>
    <property type="chains" value="BM=1-57"/>
</dbReference>
<dbReference type="PDB" id="8FTO">
    <property type="method" value="EM"/>
    <property type="resolution" value="1.85 A"/>
    <property type="chains" value="z=1-57"/>
</dbReference>
<dbReference type="PDB" id="8FZD">
    <property type="method" value="EM"/>
    <property type="resolution" value="3.10 A"/>
    <property type="chains" value="4=1-57"/>
</dbReference>
<dbReference type="PDB" id="8FZE">
    <property type="method" value="EM"/>
    <property type="resolution" value="3.00 A"/>
    <property type="chains" value="4=1-57"/>
</dbReference>
<dbReference type="PDB" id="8FZF">
    <property type="method" value="EM"/>
    <property type="resolution" value="3.20 A"/>
    <property type="chains" value="4=1-57"/>
</dbReference>
<dbReference type="PDB" id="8FZG">
    <property type="method" value="EM"/>
    <property type="resolution" value="3.10 A"/>
    <property type="chains" value="4=1-57"/>
</dbReference>
<dbReference type="PDB" id="8FZH">
    <property type="method" value="EM"/>
    <property type="resolution" value="2.90 A"/>
    <property type="chains" value="4=1-57"/>
</dbReference>
<dbReference type="PDB" id="8FZI">
    <property type="method" value="EM"/>
    <property type="resolution" value="3.10 A"/>
    <property type="chains" value="4=1-57"/>
</dbReference>
<dbReference type="PDB" id="8FZJ">
    <property type="method" value="EM"/>
    <property type="resolution" value="3.00 A"/>
    <property type="chains" value="4=1-57"/>
</dbReference>
<dbReference type="PDB" id="8G2U">
    <property type="method" value="EM"/>
    <property type="resolution" value="3.00 A"/>
    <property type="chains" value="0=2-57"/>
</dbReference>
<dbReference type="PDB" id="8G31">
    <property type="method" value="EM"/>
    <property type="resolution" value="3.20 A"/>
    <property type="chains" value="0=2-57"/>
</dbReference>
<dbReference type="PDB" id="8G34">
    <property type="method" value="EM"/>
    <property type="resolution" value="3.20 A"/>
    <property type="chains" value="0=2-57"/>
</dbReference>
<dbReference type="PDB" id="8G38">
    <property type="method" value="EM"/>
    <property type="resolution" value="3.20 A"/>
    <property type="chains" value="0=2-57"/>
</dbReference>
<dbReference type="PDB" id="8G6W">
    <property type="method" value="EM"/>
    <property type="resolution" value="2.02 A"/>
    <property type="chains" value="z=1-57"/>
</dbReference>
<dbReference type="PDB" id="8G6X">
    <property type="method" value="EM"/>
    <property type="resolution" value="2.31 A"/>
    <property type="chains" value="z=1-57"/>
</dbReference>
<dbReference type="PDB" id="8G6Y">
    <property type="method" value="EM"/>
    <property type="resolution" value="2.09 A"/>
    <property type="chains" value="z=1-57"/>
</dbReference>
<dbReference type="PDB" id="8G7P">
    <property type="method" value="EM"/>
    <property type="resolution" value="2.90 A"/>
    <property type="chains" value="4=1-57"/>
</dbReference>
<dbReference type="PDB" id="8G7Q">
    <property type="method" value="EM"/>
    <property type="resolution" value="3.10 A"/>
    <property type="chains" value="4=1-57"/>
</dbReference>
<dbReference type="PDB" id="8G7R">
    <property type="method" value="EM"/>
    <property type="resolution" value="2.80 A"/>
    <property type="chains" value="4=1-57"/>
</dbReference>
<dbReference type="PDB" id="8G7S">
    <property type="method" value="EM"/>
    <property type="resolution" value="3.10 A"/>
    <property type="chains" value="4=1-57"/>
</dbReference>
<dbReference type="PDB" id="8HSP">
    <property type="method" value="EM"/>
    <property type="resolution" value="2.32 A"/>
    <property type="chains" value="z=1-57"/>
</dbReference>
<dbReference type="PDB" id="8HTZ">
    <property type="method" value="EM"/>
    <property type="resolution" value="2.40 A"/>
    <property type="chains" value="z=1-57"/>
</dbReference>
<dbReference type="PDB" id="8HU1">
    <property type="method" value="EM"/>
    <property type="resolution" value="2.69 A"/>
    <property type="chains" value="z=1-57"/>
</dbReference>
<dbReference type="PDB" id="8IFB">
    <property type="method" value="EM"/>
    <property type="resolution" value="2.43 A"/>
    <property type="chains" value="z=1-57"/>
</dbReference>
<dbReference type="PDB" id="8IFC">
    <property type="method" value="EM"/>
    <property type="resolution" value="2.90 A"/>
    <property type="chains" value="z=1-57"/>
</dbReference>
<dbReference type="PDB" id="8J1Z">
    <property type="method" value="EM"/>
    <property type="resolution" value="2.60 A"/>
    <property type="chains" value="z=1-57"/>
</dbReference>
<dbReference type="PDB" id="8P16">
    <property type="method" value="EM"/>
    <property type="resolution" value="2.77 A"/>
    <property type="chains" value="b=1-57"/>
</dbReference>
<dbReference type="PDB" id="8P17">
    <property type="method" value="EM"/>
    <property type="resolution" value="2.78 A"/>
    <property type="chains" value="b=1-57"/>
</dbReference>
<dbReference type="PDB" id="8P18">
    <property type="method" value="EM"/>
    <property type="resolution" value="2.77 A"/>
    <property type="chains" value="b=1-57"/>
</dbReference>
<dbReference type="PDB" id="8PEG">
    <property type="method" value="EM"/>
    <property type="resolution" value="3.30 A"/>
    <property type="chains" value="5=1-57"/>
</dbReference>
<dbReference type="PDB" id="8PHJ">
    <property type="method" value="EM"/>
    <property type="resolution" value="3.67 A"/>
    <property type="chains" value="z=1-57"/>
</dbReference>
<dbReference type="PDB" id="8PKL">
    <property type="method" value="EM"/>
    <property type="resolution" value="3.09 A"/>
    <property type="chains" value="5=1-57"/>
</dbReference>
<dbReference type="PDB" id="8PVA">
    <property type="method" value="EM"/>
    <property type="resolution" value="4.50 A"/>
    <property type="chains" value="z=1-57"/>
</dbReference>
<dbReference type="PDB" id="8Q4F">
    <property type="method" value="EM"/>
    <property type="resolution" value="3.10 A"/>
    <property type="chains" value="z=1-57"/>
</dbReference>
<dbReference type="PDB" id="8QBT">
    <property type="method" value="EM"/>
    <property type="resolution" value="2.20 A"/>
    <property type="chains" value="a=1-57"/>
</dbReference>
<dbReference type="PDB" id="8QK7">
    <property type="method" value="EM"/>
    <property type="resolution" value="2.77 A"/>
    <property type="chains" value="b=1-57"/>
</dbReference>
<dbReference type="PDB" id="8QOA">
    <property type="method" value="EM"/>
    <property type="resolution" value="2.00 A"/>
    <property type="chains" value="z=1-57"/>
</dbReference>
<dbReference type="PDB" id="8R6C">
    <property type="method" value="EM"/>
    <property type="resolution" value="2.20 A"/>
    <property type="chains" value="z=1-57"/>
</dbReference>
<dbReference type="PDB" id="8R8M">
    <property type="method" value="EM"/>
    <property type="resolution" value="2.40 A"/>
    <property type="chains" value="z=1-57"/>
</dbReference>
<dbReference type="PDB" id="8RPY">
    <property type="method" value="EM"/>
    <property type="resolution" value="2.64 A"/>
    <property type="chains" value="0=2-57"/>
</dbReference>
<dbReference type="PDB" id="8RPZ">
    <property type="method" value="EM"/>
    <property type="resolution" value="2.44 A"/>
    <property type="chains" value="0=2-57"/>
</dbReference>
<dbReference type="PDB" id="8RQ0">
    <property type="method" value="EM"/>
    <property type="resolution" value="2.44 A"/>
    <property type="chains" value="0=2-57"/>
</dbReference>
<dbReference type="PDB" id="8RQ2">
    <property type="method" value="EM"/>
    <property type="resolution" value="2.44 A"/>
    <property type="chains" value="0=2-57"/>
</dbReference>
<dbReference type="PDB" id="8SYL">
    <property type="method" value="EM"/>
    <property type="resolution" value="2.90 A"/>
    <property type="chains" value="4=1-57"/>
</dbReference>
<dbReference type="PDB" id="8T5D">
    <property type="method" value="EM"/>
    <property type="resolution" value="3.20 A"/>
    <property type="chains" value="0=2-57"/>
</dbReference>
<dbReference type="PDB" id="8T5H">
    <property type="method" value="EM"/>
    <property type="resolution" value="3.30 A"/>
    <property type="chains" value="0=2-57"/>
</dbReference>
<dbReference type="PDB" id="8VS9">
    <property type="method" value="EM"/>
    <property type="resolution" value="3.90 A"/>
    <property type="chains" value="L32=1-57"/>
</dbReference>
<dbReference type="PDB" id="8VSA">
    <property type="method" value="EM"/>
    <property type="resolution" value="3.70 A"/>
    <property type="chains" value="L32=1-57"/>
</dbReference>
<dbReference type="PDB" id="8W51">
    <property type="method" value="EM"/>
    <property type="resolution" value="2.40 A"/>
    <property type="chains" value="1=1-57"/>
</dbReference>
<dbReference type="PDB" id="8YUO">
    <property type="method" value="EM"/>
    <property type="resolution" value="2.25 A"/>
    <property type="chains" value="z=1-57"/>
</dbReference>
<dbReference type="PDB" id="8YUP">
    <property type="method" value="EM"/>
    <property type="resolution" value="2.39 A"/>
    <property type="chains" value="z=1-57"/>
</dbReference>
<dbReference type="PDB" id="8YUQ">
    <property type="method" value="EM"/>
    <property type="resolution" value="2.41 A"/>
    <property type="chains" value="z=1-57"/>
</dbReference>
<dbReference type="PDB" id="8YUR">
    <property type="method" value="EM"/>
    <property type="resolution" value="2.47 A"/>
    <property type="chains" value="z=1-57"/>
</dbReference>
<dbReference type="PDB" id="8YUS">
    <property type="method" value="EM"/>
    <property type="resolution" value="2.43 A"/>
    <property type="chains" value="z=1-57"/>
</dbReference>
<dbReference type="PDB" id="9D89">
    <property type="method" value="EM"/>
    <property type="resolution" value="1.95 A"/>
    <property type="chains" value="M=2-57"/>
</dbReference>
<dbReference type="PDB" id="9FBV">
    <property type="method" value="EM"/>
    <property type="resolution" value="2.40 A"/>
    <property type="chains" value="z=1-57"/>
</dbReference>
<dbReference type="PDB" id="9GFT">
    <property type="method" value="EM"/>
    <property type="resolution" value="3.10 A"/>
    <property type="chains" value="Av=1-57, n=1-56"/>
</dbReference>
<dbReference type="PDB" id="9GGR">
    <property type="method" value="EM"/>
    <property type="resolution" value="3.20 A"/>
    <property type="chains" value="Av/n=1-57"/>
</dbReference>
<dbReference type="PDB" id="9H3S">
    <property type="method" value="EM"/>
    <property type="resolution" value="4.16 A"/>
    <property type="chains" value="0=2-57"/>
</dbReference>
<dbReference type="PDB" id="9H3T">
    <property type="method" value="EM"/>
    <property type="resolution" value="3.85 A"/>
    <property type="chains" value="0=2-57"/>
</dbReference>
<dbReference type="PDB" id="9H3U">
    <property type="method" value="EM"/>
    <property type="resolution" value="3.47 A"/>
    <property type="chains" value="0=2-57"/>
</dbReference>
<dbReference type="PDB" id="9H3V">
    <property type="method" value="EM"/>
    <property type="resolution" value="3.55 A"/>
    <property type="chains" value="0=2-57"/>
</dbReference>
<dbReference type="PDB" id="9H3W">
    <property type="method" value="EM"/>
    <property type="resolution" value="5.38 A"/>
    <property type="chains" value="0=2-57"/>
</dbReference>
<dbReference type="PDB" id="9H3X">
    <property type="method" value="EM"/>
    <property type="resolution" value="4.12 A"/>
    <property type="chains" value="0=2-57"/>
</dbReference>
<dbReference type="PDB" id="9H3Y">
    <property type="method" value="EM"/>
    <property type="resolution" value="3.09 A"/>
    <property type="chains" value="0=2-57"/>
</dbReference>
<dbReference type="PDB" id="9H3Z">
    <property type="method" value="EM"/>
    <property type="resolution" value="2.98 A"/>
    <property type="chains" value="0=2-57"/>
</dbReference>
<dbReference type="PDB" id="9HA5">
    <property type="method" value="EM"/>
    <property type="resolution" value="3.30 A"/>
    <property type="chains" value="0=2-57"/>
</dbReference>
<dbReference type="PDB" id="9HA6">
    <property type="method" value="EM"/>
    <property type="resolution" value="3.08 A"/>
    <property type="chains" value="0=2-57"/>
</dbReference>
<dbReference type="PDB" id="9HAI">
    <property type="method" value="EM"/>
    <property type="resolution" value="3.01 A"/>
    <property type="chains" value="0=2-57"/>
</dbReference>
<dbReference type="PDB" id="9MOR">
    <property type="method" value="EM"/>
    <property type="resolution" value="2.65 A"/>
    <property type="chains" value="b=1-57"/>
</dbReference>
<dbReference type="PDB" id="9MQ4">
    <property type="method" value="EM"/>
    <property type="resolution" value="2.78 A"/>
    <property type="chains" value="b=1-57"/>
</dbReference>
<dbReference type="PDBsum" id="2J28"/>
<dbReference type="PDBsum" id="2RDO"/>
<dbReference type="PDBsum" id="3BBX"/>
<dbReference type="PDBsum" id="3J5L"/>
<dbReference type="PDBsum" id="3J7Z"/>
<dbReference type="PDBsum" id="3J8G"/>
<dbReference type="PDBsum" id="3J9Y"/>
<dbReference type="PDBsum" id="3J9Z"/>
<dbReference type="PDBsum" id="3JA1"/>
<dbReference type="PDBsum" id="3JBU"/>
<dbReference type="PDBsum" id="3JBV"/>
<dbReference type="PDBsum" id="3JCD"/>
<dbReference type="PDBsum" id="3JCE"/>
<dbReference type="PDBsum" id="3JCJ"/>
<dbReference type="PDBsum" id="3JCN"/>
<dbReference type="PDBsum" id="4CSU"/>
<dbReference type="PDBsum" id="4U1U"/>
<dbReference type="PDBsum" id="4U1V"/>
<dbReference type="PDBsum" id="4U20"/>
<dbReference type="PDBsum" id="4U24"/>
<dbReference type="PDBsum" id="4U25"/>
<dbReference type="PDBsum" id="4U26"/>
<dbReference type="PDBsum" id="4U27"/>
<dbReference type="PDBsum" id="4UY8"/>
<dbReference type="PDBsum" id="4V47"/>
<dbReference type="PDBsum" id="4V48"/>
<dbReference type="PDBsum" id="4V4H"/>
<dbReference type="PDBsum" id="4V4Q"/>
<dbReference type="PDBsum" id="4V4V"/>
<dbReference type="PDBsum" id="4V4W"/>
<dbReference type="PDBsum" id="4V50"/>
<dbReference type="PDBsum" id="4V52"/>
<dbReference type="PDBsum" id="4V53"/>
<dbReference type="PDBsum" id="4V54"/>
<dbReference type="PDBsum" id="4V55"/>
<dbReference type="PDBsum" id="4V56"/>
<dbReference type="PDBsum" id="4V57"/>
<dbReference type="PDBsum" id="4V5B"/>
<dbReference type="PDBsum" id="4V5H"/>
<dbReference type="PDBsum" id="4V5Y"/>
<dbReference type="PDBsum" id="4V64"/>
<dbReference type="PDBsum" id="4V65"/>
<dbReference type="PDBsum" id="4V66"/>
<dbReference type="PDBsum" id="4V69"/>
<dbReference type="PDBsum" id="4V6C"/>
<dbReference type="PDBsum" id="4V6D"/>
<dbReference type="PDBsum" id="4V6E"/>
<dbReference type="PDBsum" id="4V6K"/>
<dbReference type="PDBsum" id="4V6L"/>
<dbReference type="PDBsum" id="4V6M"/>
<dbReference type="PDBsum" id="4V6N"/>
<dbReference type="PDBsum" id="4V6O"/>
<dbReference type="PDBsum" id="4V6P"/>
<dbReference type="PDBsum" id="4V6Q"/>
<dbReference type="PDBsum" id="4V6R"/>
<dbReference type="PDBsum" id="4V6S"/>
<dbReference type="PDBsum" id="4V6T"/>
<dbReference type="PDBsum" id="4V6V"/>
<dbReference type="PDBsum" id="4V6Y"/>
<dbReference type="PDBsum" id="4V6Z"/>
<dbReference type="PDBsum" id="4V70"/>
<dbReference type="PDBsum" id="4V71"/>
<dbReference type="PDBsum" id="4V72"/>
<dbReference type="PDBsum" id="4V73"/>
<dbReference type="PDBsum" id="4V74"/>
<dbReference type="PDBsum" id="4V75"/>
<dbReference type="PDBsum" id="4V76"/>
<dbReference type="PDBsum" id="4V77"/>
<dbReference type="PDBsum" id="4V78"/>
<dbReference type="PDBsum" id="4V79"/>
<dbReference type="PDBsum" id="4V7A"/>
<dbReference type="PDBsum" id="4V7B"/>
<dbReference type="PDBsum" id="4V7C"/>
<dbReference type="PDBsum" id="4V7D"/>
<dbReference type="PDBsum" id="4V7I"/>
<dbReference type="PDBsum" id="4V7S"/>
<dbReference type="PDBsum" id="4V7T"/>
<dbReference type="PDBsum" id="4V7U"/>
<dbReference type="PDBsum" id="4V7V"/>
<dbReference type="PDBsum" id="4V85"/>
<dbReference type="PDBsum" id="4V89"/>
<dbReference type="PDBsum" id="4V9C"/>
<dbReference type="PDBsum" id="4V9D"/>
<dbReference type="PDBsum" id="4V9O"/>
<dbReference type="PDBsum" id="4V9P"/>
<dbReference type="PDBsum" id="4WF1"/>
<dbReference type="PDBsum" id="4WOI"/>
<dbReference type="PDBsum" id="4WWW"/>
<dbReference type="PDBsum" id="4YBB"/>
<dbReference type="PDBsum" id="5ADY"/>
<dbReference type="PDBsum" id="5AFI"/>
<dbReference type="PDBsum" id="5AKA"/>
<dbReference type="PDBsum" id="5GAD"/>
<dbReference type="PDBsum" id="5GAE"/>
<dbReference type="PDBsum" id="5GAF"/>
<dbReference type="PDBsum" id="5GAG"/>
<dbReference type="PDBsum" id="5GAH"/>
<dbReference type="PDBsum" id="5H5U"/>
<dbReference type="PDBsum" id="5IQR"/>
<dbReference type="PDBsum" id="5IT8"/>
<dbReference type="PDBsum" id="5J5B"/>
<dbReference type="PDBsum" id="5J7L"/>
<dbReference type="PDBsum" id="5J88"/>
<dbReference type="PDBsum" id="5J8A"/>
<dbReference type="PDBsum" id="5J91"/>
<dbReference type="PDBsum" id="5JC9"/>
<dbReference type="PDBsum" id="5JTE"/>
<dbReference type="PDBsum" id="5JU8"/>
<dbReference type="PDBsum" id="5KCR"/>
<dbReference type="PDBsum" id="5KCS"/>
<dbReference type="PDBsum" id="5KPS"/>
<dbReference type="PDBsum" id="5KPV"/>
<dbReference type="PDBsum" id="5KPW"/>
<dbReference type="PDBsum" id="5KPX"/>
<dbReference type="PDBsum" id="5L3P"/>
<dbReference type="PDBsum" id="5LZA"/>
<dbReference type="PDBsum" id="5LZB"/>
<dbReference type="PDBsum" id="5LZC"/>
<dbReference type="PDBsum" id="5LZD"/>
<dbReference type="PDBsum" id="5LZE"/>
<dbReference type="PDBsum" id="5LZF"/>
<dbReference type="PDBsum" id="5MDV"/>
<dbReference type="PDBsum" id="5MDW"/>
<dbReference type="PDBsum" id="5MDY"/>
<dbReference type="PDBsum" id="5MDZ"/>
<dbReference type="PDBsum" id="5MGP"/>
<dbReference type="PDBsum" id="5NCO"/>
<dbReference type="PDBsum" id="5NP6"/>
<dbReference type="PDBsum" id="5NWY"/>
<dbReference type="PDBsum" id="5O2R"/>
<dbReference type="PDBsum" id="5U4I"/>
<dbReference type="PDBsum" id="5U9F"/>
<dbReference type="PDBsum" id="5U9G"/>
<dbReference type="PDBsum" id="5UYK"/>
<dbReference type="PDBsum" id="5UYL"/>
<dbReference type="PDBsum" id="5UYM"/>
<dbReference type="PDBsum" id="5UYN"/>
<dbReference type="PDBsum" id="5UYP"/>
<dbReference type="PDBsum" id="5UYQ"/>
<dbReference type="PDBsum" id="5WDT"/>
<dbReference type="PDBsum" id="5WE4"/>
<dbReference type="PDBsum" id="5WE6"/>
<dbReference type="PDBsum" id="5WF0"/>
<dbReference type="PDBsum" id="5WFK"/>
<dbReference type="PDBsum" id="5WFS"/>
<dbReference type="PDBsum" id="6BU8"/>
<dbReference type="PDBsum" id="6BY1"/>
<dbReference type="PDBsum" id="6C4I"/>
<dbReference type="PDBsum" id="6DNC"/>
<dbReference type="PDBsum" id="6ENF"/>
<dbReference type="PDBsum" id="6ENJ"/>
<dbReference type="PDBsum" id="6ENU"/>
<dbReference type="PDBsum" id="6GBZ"/>
<dbReference type="PDBsum" id="6GC0"/>
<dbReference type="PDBsum" id="6GC4"/>
<dbReference type="PDBsum" id="6GC6"/>
<dbReference type="PDBsum" id="6GC7"/>
<dbReference type="PDBsum" id="6GC8"/>
<dbReference type="PDBsum" id="6GWT"/>
<dbReference type="PDBsum" id="6GXM"/>
<dbReference type="PDBsum" id="6GXN"/>
<dbReference type="PDBsum" id="6GXO"/>
<dbReference type="PDBsum" id="6GXP"/>
<dbReference type="PDBsum" id="6H4N"/>
<dbReference type="PDBsum" id="6H58"/>
<dbReference type="PDBsum" id="6HRM"/>
<dbReference type="PDBsum" id="6I0Y"/>
<dbReference type="PDBsum" id="6I7V"/>
<dbReference type="PDBsum" id="6O9J"/>
<dbReference type="PDBsum" id="6O9K"/>
<dbReference type="PDBsum" id="6OFX"/>
<dbReference type="PDBsum" id="6OG7"/>
<dbReference type="PDBsum" id="6OGF"/>
<dbReference type="PDBsum" id="6OGG"/>
<dbReference type="PDBsum" id="6OGI"/>
<dbReference type="PDBsum" id="6OM6"/>
<dbReference type="PDBsum" id="6ORE"/>
<dbReference type="PDBsum" id="6ORL"/>
<dbReference type="PDBsum" id="6OSK"/>
<dbReference type="PDBsum" id="6OSQ"/>
<dbReference type="PDBsum" id="6OST"/>
<dbReference type="PDBsum" id="6OT3"/>
<dbReference type="PDBsum" id="6OUO"/>
<dbReference type="PDBsum" id="6PJ6"/>
<dbReference type="PDBsum" id="6Q98"/>
<dbReference type="PDBsum" id="6Q9A"/>
<dbReference type="PDBsum" id="6QDW"/>
<dbReference type="PDBsum" id="6QUL"/>
<dbReference type="PDBsum" id="6S0K"/>
<dbReference type="PDBsum" id="6SZS"/>
<dbReference type="PDBsum" id="6TBV"/>
<dbReference type="PDBsum" id="6TC3"/>
<dbReference type="PDBsum" id="6U48"/>
<dbReference type="PDBsum" id="6VU3"/>
<dbReference type="PDBsum" id="6VYQ"/>
<dbReference type="PDBsum" id="6VYR"/>
<dbReference type="PDBsum" id="6VYS"/>
<dbReference type="PDBsum" id="6VYT"/>
<dbReference type="PDBsum" id="6VYU"/>
<dbReference type="PDBsum" id="6VYW"/>
<dbReference type="PDBsum" id="6VYX"/>
<dbReference type="PDBsum" id="6VYY"/>
<dbReference type="PDBsum" id="6VYZ"/>
<dbReference type="PDBsum" id="6VZ2"/>
<dbReference type="PDBsum" id="6VZ3"/>
<dbReference type="PDBsum" id="6VZ5"/>
<dbReference type="PDBsum" id="6VZ7"/>
<dbReference type="PDBsum" id="6VZJ"/>
<dbReference type="PDBsum" id="6WD0"/>
<dbReference type="PDBsum" id="6WD1"/>
<dbReference type="PDBsum" id="6WD2"/>
<dbReference type="PDBsum" id="6WD3"/>
<dbReference type="PDBsum" id="6WD4"/>
<dbReference type="PDBsum" id="6WD5"/>
<dbReference type="PDBsum" id="6WD6"/>
<dbReference type="PDBsum" id="6WD7"/>
<dbReference type="PDBsum" id="6WD8"/>
<dbReference type="PDBsum" id="6WD9"/>
<dbReference type="PDBsum" id="6WDA"/>
<dbReference type="PDBsum" id="6WDB"/>
<dbReference type="PDBsum" id="6WDC"/>
<dbReference type="PDBsum" id="6WDD"/>
<dbReference type="PDBsum" id="6WDE"/>
<dbReference type="PDBsum" id="6WDF"/>
<dbReference type="PDBsum" id="6WDG"/>
<dbReference type="PDBsum" id="6WDH"/>
<dbReference type="PDBsum" id="6WDI"/>
<dbReference type="PDBsum" id="6WDJ"/>
<dbReference type="PDBsum" id="6WDK"/>
<dbReference type="PDBsum" id="6WDL"/>
<dbReference type="PDBsum" id="6WDM"/>
<dbReference type="PDBsum" id="6WNT"/>
<dbReference type="PDBsum" id="6WNV"/>
<dbReference type="PDBsum" id="6WNW"/>
<dbReference type="PDBsum" id="6X6T"/>
<dbReference type="PDBsum" id="6X7F"/>
<dbReference type="PDBsum" id="6X7K"/>
<dbReference type="PDBsum" id="6X9Q"/>
<dbReference type="PDBsum" id="6XDQ"/>
<dbReference type="PDBsum" id="6XDR"/>
<dbReference type="PDBsum" id="6XGF"/>
<dbReference type="PDBsum" id="6XII"/>
<dbReference type="PDBsum" id="6XIJ"/>
<dbReference type="PDBsum" id="6XZ7"/>
<dbReference type="PDBsum" id="6XZA"/>
<dbReference type="PDBsum" id="6XZB"/>
<dbReference type="PDBsum" id="6Y69"/>
<dbReference type="PDBsum" id="6YS3"/>
<dbReference type="PDBsum" id="6YSR"/>
<dbReference type="PDBsum" id="6YSS"/>
<dbReference type="PDBsum" id="6YST"/>
<dbReference type="PDBsum" id="6YSU"/>
<dbReference type="PDBsum" id="6ZTJ"/>
<dbReference type="PDBsum" id="6ZTL"/>
<dbReference type="PDBsum" id="6ZTM"/>
<dbReference type="PDBsum" id="6ZTN"/>
<dbReference type="PDBsum" id="6ZTO"/>
<dbReference type="PDBsum" id="6ZTP"/>
<dbReference type="PDBsum" id="6ZU1"/>
<dbReference type="PDBsum" id="7ABZ"/>
<dbReference type="PDBsum" id="7AC7"/>
<dbReference type="PDBsum" id="7ACJ"/>
<dbReference type="PDBsum" id="7ACR"/>
<dbReference type="PDBsum" id="7B5K"/>
<dbReference type="PDBsum" id="7BL2"/>
<dbReference type="PDBsum" id="7BL3"/>
<dbReference type="PDBsum" id="7BL4"/>
<dbReference type="PDBsum" id="7BL5"/>
<dbReference type="PDBsum" id="7BL6"/>
<dbReference type="PDBsum" id="7BV8"/>
<dbReference type="PDBsum" id="7D6Z"/>
<dbReference type="PDBsum" id="7D80"/>
<dbReference type="PDBsum" id="7JSS"/>
<dbReference type="PDBsum" id="7JSW"/>
<dbReference type="PDBsum" id="7JSZ"/>
<dbReference type="PDBsum" id="7JT1"/>
<dbReference type="PDBsum" id="7JT2"/>
<dbReference type="PDBsum" id="7JT3"/>
<dbReference type="PDBsum" id="7K00"/>
<dbReference type="PDBsum" id="7K50"/>
<dbReference type="PDBsum" id="7K51"/>
<dbReference type="PDBsum" id="7K52"/>
<dbReference type="PDBsum" id="7K53"/>
<dbReference type="PDBsum" id="7K54"/>
<dbReference type="PDBsum" id="7K55"/>
<dbReference type="PDBsum" id="7LV0"/>
<dbReference type="PDBsum" id="7LVK"/>
<dbReference type="PDBsum" id="7M5D"/>
<dbReference type="PDBsum" id="7N1P"/>
<dbReference type="PDBsum" id="7N2C"/>
<dbReference type="PDBsum" id="7N2U"/>
<dbReference type="PDBsum" id="7N2V"/>
<dbReference type="PDBsum" id="7N30"/>
<dbReference type="PDBsum" id="7N31"/>
<dbReference type="PDBsum" id="7NBU"/>
<dbReference type="PDBsum" id="7NWT"/>
<dbReference type="PDBsum" id="7O19"/>
<dbReference type="PDBsum" id="7O1A"/>
<dbReference type="PDBsum" id="7O1C"/>
<dbReference type="PDBsum" id="7ODE"/>
<dbReference type="PDBsum" id="7OIZ"/>
<dbReference type="PDBsum" id="7OJ0"/>
<dbReference type="PDBsum" id="7P3K"/>
<dbReference type="PDBsum" id="7PJS"/>
<dbReference type="PDBsum" id="7PJT"/>
<dbReference type="PDBsum" id="7PJU"/>
<dbReference type="PDBsum" id="7PJV"/>
<dbReference type="PDBsum" id="7PJW"/>
<dbReference type="PDBsum" id="7PJX"/>
<dbReference type="PDBsum" id="7PJY"/>
<dbReference type="PDBsum" id="7PJZ"/>
<dbReference type="PDBsum" id="7Q4K"/>
<dbReference type="PDBsum" id="7QG8"/>
<dbReference type="PDBsum" id="7QGH"/>
<dbReference type="PDBsum" id="7QGN"/>
<dbReference type="PDBsum" id="7QGR"/>
<dbReference type="PDBsum" id="7QQ3"/>
<dbReference type="PDBsum" id="7S1G"/>
<dbReference type="PDBsum" id="7S1H"/>
<dbReference type="PDBsum" id="7S1I"/>
<dbReference type="PDBsum" id="7S1J"/>
<dbReference type="PDBsum" id="7S1K"/>
<dbReference type="PDBsum" id="7SA4"/>
<dbReference type="PDBsum" id="7SS9"/>
<dbReference type="PDBsum" id="7SSD"/>
<dbReference type="PDBsum" id="7SSL"/>
<dbReference type="PDBsum" id="7SSN"/>
<dbReference type="PDBsum" id="7SSO"/>
<dbReference type="PDBsum" id="7SSW"/>
<dbReference type="PDBsum" id="7ST2"/>
<dbReference type="PDBsum" id="7ST6"/>
<dbReference type="PDBsum" id="7ST7"/>
<dbReference type="PDBsum" id="7TOS"/>
<dbReference type="PDBsum" id="7UG7"/>
<dbReference type="PDBsum" id="7UPH"/>
<dbReference type="PDBsum" id="7Y7C"/>
<dbReference type="PDBsum" id="7Y7D"/>
<dbReference type="PDBsum" id="7Y7E"/>
<dbReference type="PDBsum" id="7Y7F"/>
<dbReference type="PDBsum" id="7Y7G"/>
<dbReference type="PDBsum" id="7Y7H"/>
<dbReference type="PDBsum" id="7Z20"/>
<dbReference type="PDBsum" id="7ZOD"/>
<dbReference type="PDBsum" id="7ZP8"/>
<dbReference type="PDBsum" id="7ZQ5"/>
<dbReference type="PDBsum" id="7ZQ6"/>
<dbReference type="PDBsum" id="7ZTA"/>
<dbReference type="PDBsum" id="8A3L"/>
<dbReference type="PDBsum" id="8AKN"/>
<dbReference type="PDBsum" id="8AM9"/>
<dbReference type="PDBsum" id="8ANA"/>
<dbReference type="PDBsum" id="8AP4"/>
<dbReference type="PDBsum" id="8AYE"/>
<dbReference type="PDBsum" id="8B0X"/>
<dbReference type="PDBsum" id="8B7Y"/>
<dbReference type="PDBsum" id="8BF7"/>
<dbReference type="PDBsum" id="8BGE"/>
<dbReference type="PDBsum" id="8BGH"/>
<dbReference type="PDBsum" id="8BH4"/>
<dbReference type="PDBsum" id="8BHJ"/>
<dbReference type="PDBsum" id="8BHL"/>
<dbReference type="PDBsum" id="8BHN"/>
<dbReference type="PDBsum" id="8BHP"/>
<dbReference type="PDBsum" id="8BIL"/>
<dbReference type="PDBsum" id="8BIM"/>
<dbReference type="PDBsum" id="8C8X"/>
<dbReference type="PDBsum" id="8C8Y"/>
<dbReference type="PDBsum" id="8C8Z"/>
<dbReference type="PDBsum" id="8C90"/>
<dbReference type="PDBsum" id="8C91"/>
<dbReference type="PDBsum" id="8C92"/>
<dbReference type="PDBsum" id="8C93"/>
<dbReference type="PDBsum" id="8C94"/>
<dbReference type="PDBsum" id="8C96"/>
<dbReference type="PDBsum" id="8C97"/>
<dbReference type="PDBsum" id="8CAM"/>
<dbReference type="PDBsum" id="8CEU"/>
<dbReference type="PDBsum" id="8CGD"/>
<dbReference type="PDBsum" id="8CGK"/>
<dbReference type="PDBsum" id="8CGV"/>
<dbReference type="PDBsum" id="8E30"/>
<dbReference type="PDBsum" id="8E32"/>
<dbReference type="PDBsum" id="8E33"/>
<dbReference type="PDBsum" id="8E35"/>
<dbReference type="PDBsum" id="8E36"/>
<dbReference type="PDBsum" id="8E3L"/>
<dbReference type="PDBsum" id="8E3M"/>
<dbReference type="PDBsum" id="8E3O"/>
<dbReference type="PDBsum" id="8E41"/>
<dbReference type="PDBsum" id="8E42"/>
<dbReference type="PDBsum" id="8E43"/>
<dbReference type="PDBsum" id="8E44"/>
<dbReference type="PDBsum" id="8E45"/>
<dbReference type="PDBsum" id="8E46"/>
<dbReference type="PDBsum" id="8E47"/>
<dbReference type="PDBsum" id="8E48"/>
<dbReference type="PDBsum" id="8E49"/>
<dbReference type="PDBsum" id="8EIU"/>
<dbReference type="PDBsum" id="8EKC"/>
<dbReference type="PDBsum" id="8EMM"/>
<dbReference type="PDBsum" id="8FIZ"/>
<dbReference type="PDBsum" id="8FTO"/>
<dbReference type="PDBsum" id="8FZD"/>
<dbReference type="PDBsum" id="8FZE"/>
<dbReference type="PDBsum" id="8FZF"/>
<dbReference type="PDBsum" id="8FZG"/>
<dbReference type="PDBsum" id="8FZH"/>
<dbReference type="PDBsum" id="8FZI"/>
<dbReference type="PDBsum" id="8FZJ"/>
<dbReference type="PDBsum" id="8G2U"/>
<dbReference type="PDBsum" id="8G31"/>
<dbReference type="PDBsum" id="8G34"/>
<dbReference type="PDBsum" id="8G38"/>
<dbReference type="PDBsum" id="8G6W"/>
<dbReference type="PDBsum" id="8G6X"/>
<dbReference type="PDBsum" id="8G6Y"/>
<dbReference type="PDBsum" id="8G7P"/>
<dbReference type="PDBsum" id="8G7Q"/>
<dbReference type="PDBsum" id="8G7R"/>
<dbReference type="PDBsum" id="8G7S"/>
<dbReference type="PDBsum" id="8HSP"/>
<dbReference type="PDBsum" id="8HTZ"/>
<dbReference type="PDBsum" id="8HU1"/>
<dbReference type="PDBsum" id="8IFB"/>
<dbReference type="PDBsum" id="8IFC"/>
<dbReference type="PDBsum" id="8J1Z"/>
<dbReference type="PDBsum" id="8P16"/>
<dbReference type="PDBsum" id="8P17"/>
<dbReference type="PDBsum" id="8P18"/>
<dbReference type="PDBsum" id="8PEG"/>
<dbReference type="PDBsum" id="8PHJ"/>
<dbReference type="PDBsum" id="8PKL"/>
<dbReference type="PDBsum" id="8PVA"/>
<dbReference type="PDBsum" id="8Q4F"/>
<dbReference type="PDBsum" id="8QBT"/>
<dbReference type="PDBsum" id="8QK7"/>
<dbReference type="PDBsum" id="8QOA"/>
<dbReference type="PDBsum" id="8R6C"/>
<dbReference type="PDBsum" id="8R8M"/>
<dbReference type="PDBsum" id="8RPY"/>
<dbReference type="PDBsum" id="8RPZ"/>
<dbReference type="PDBsum" id="8RQ0"/>
<dbReference type="PDBsum" id="8RQ2"/>
<dbReference type="PDBsum" id="8SYL"/>
<dbReference type="PDBsum" id="8T5D"/>
<dbReference type="PDBsum" id="8T5H"/>
<dbReference type="PDBsum" id="8VS9"/>
<dbReference type="PDBsum" id="8VSA"/>
<dbReference type="PDBsum" id="8W51"/>
<dbReference type="PDBsum" id="8YUO"/>
<dbReference type="PDBsum" id="8YUP"/>
<dbReference type="PDBsum" id="8YUQ"/>
<dbReference type="PDBsum" id="8YUR"/>
<dbReference type="PDBsum" id="8YUS"/>
<dbReference type="PDBsum" id="9D89"/>
<dbReference type="PDBsum" id="9FBV"/>
<dbReference type="PDBsum" id="9GFT"/>
<dbReference type="PDBsum" id="9GGR"/>
<dbReference type="PDBsum" id="9H3S"/>
<dbReference type="PDBsum" id="9H3T"/>
<dbReference type="PDBsum" id="9H3U"/>
<dbReference type="PDBsum" id="9H3V"/>
<dbReference type="PDBsum" id="9H3W"/>
<dbReference type="PDBsum" id="9H3X"/>
<dbReference type="PDBsum" id="9H3Y"/>
<dbReference type="PDBsum" id="9H3Z"/>
<dbReference type="PDBsum" id="9HA5"/>
<dbReference type="PDBsum" id="9HA6"/>
<dbReference type="PDBsum" id="9HAI"/>
<dbReference type="PDBsum" id="9MOR"/>
<dbReference type="PDBsum" id="9MQ4"/>
<dbReference type="EMDB" id="EMD-0076"/>
<dbReference type="EMDB" id="EMD-0080"/>
<dbReference type="EMDB" id="EMD-0081"/>
<dbReference type="EMDB" id="EMD-0082"/>
<dbReference type="EMDB" id="EMD-0083"/>
<dbReference type="EMDB" id="EMD-0137"/>
<dbReference type="EMDB" id="EMD-0139"/>
<dbReference type="EMDB" id="EMD-0261"/>
<dbReference type="EMDB" id="EMD-0322"/>
<dbReference type="EMDB" id="EMD-10073"/>
<dbReference type="EMDB" id="EMD-10353"/>
<dbReference type="EMDB" id="EMD-10453"/>
<dbReference type="EMDB" id="EMD-10458"/>
<dbReference type="EMDB" id="EMD-10655"/>
<dbReference type="EMDB" id="EMD-10656"/>
<dbReference type="EMDB" id="EMD-10657"/>
<dbReference type="EMDB" id="EMD-10705"/>
<dbReference type="EMDB" id="EMD-10905"/>
<dbReference type="EMDB" id="EMD-10906"/>
<dbReference type="EMDB" id="EMD-10907"/>
<dbReference type="EMDB" id="EMD-10908"/>
<dbReference type="EMDB" id="EMD-11418"/>
<dbReference type="EMDB" id="EMD-11419"/>
<dbReference type="EMDB" id="EMD-11420"/>
<dbReference type="EMDB" id="EMD-11421"/>
<dbReference type="EMDB" id="EMD-11422"/>
<dbReference type="EMDB" id="EMD-11423"/>
<dbReference type="EMDB" id="EMD-11426"/>
<dbReference type="EMDB" id="EMD-11710"/>
<dbReference type="EMDB" id="EMD-11713"/>
<dbReference type="EMDB" id="EMD-11717"/>
<dbReference type="EMDB" id="EMD-11718"/>
<dbReference type="EMDB" id="EMD-12035"/>
<dbReference type="EMDB" id="EMD-12215"/>
<dbReference type="EMDB" id="EMD-12216"/>
<dbReference type="EMDB" id="EMD-12217"/>
<dbReference type="EMDB" id="EMD-12218"/>
<dbReference type="EMDB" id="EMD-12219"/>
<dbReference type="EMDB" id="EMD-12261"/>
<dbReference type="EMDB" id="EMD-12635"/>
<dbReference type="EMDB" id="EMD-12693"/>
<dbReference type="EMDB" id="EMD-12694"/>
<dbReference type="EMDB" id="EMD-12695"/>
<dbReference type="EMDB" id="EMD-12826"/>
<dbReference type="EMDB" id="EMD-12936"/>
<dbReference type="EMDB" id="EMD-12937"/>
<dbReference type="EMDB" id="EMD-13180"/>
<dbReference type="EMDB" id="EMD-13458"/>
<dbReference type="EMDB" id="EMD-13459"/>
<dbReference type="EMDB" id="EMD-13460"/>
<dbReference type="EMDB" id="EMD-13461"/>
<dbReference type="EMDB" id="EMD-13462"/>
<dbReference type="EMDB" id="EMD-13463"/>
<dbReference type="EMDB" id="EMD-13464"/>
<dbReference type="EMDB" id="EMD-13465"/>
<dbReference type="EMDB" id="EMD-13805"/>
<dbReference type="EMDB" id="EMD-13952"/>
<dbReference type="EMDB" id="EMD-13955"/>
<dbReference type="EMDB" id="EMD-13956"/>
<dbReference type="EMDB" id="EMD-13958"/>
<dbReference type="EMDB" id="EMD-14121"/>
<dbReference type="EMDB" id="EMD-14454"/>
<dbReference type="EMDB" id="EMD-14846"/>
<dbReference type="EMDB" id="EMD-14850"/>
<dbReference type="EMDB" id="EMD-14864"/>
<dbReference type="EMDB" id="EMD-14865"/>
<dbReference type="EMDB" id="EMD-14956"/>
<dbReference type="EMDB" id="EMD-15116"/>
<dbReference type="EMDB" id="EMD-15558"/>
<dbReference type="EMDB" id="EMD-15712"/>
<dbReference type="EMDB" id="EMD-15793"/>
<dbReference type="EMDB" id="EMD-15905"/>
<dbReference type="EMDB" id="EMD-16015"/>
<dbReference type="EMDB" id="EMD-16029"/>
<dbReference type="EMDB" id="EMD-16031"/>
<dbReference type="EMDB" id="EMD-16047"/>
<dbReference type="EMDB" id="EMD-16057"/>
<dbReference type="EMDB" id="EMD-16059"/>
<dbReference type="EMDB" id="EMD-16062"/>
<dbReference type="EMDB" id="EMD-16065"/>
<dbReference type="EMDB" id="EMD-16081"/>
<dbReference type="EMDB" id="EMD-16082"/>
<dbReference type="EMDB" id="EMD-16494"/>
<dbReference type="EMDB" id="EMD-16495"/>
<dbReference type="EMDB" id="EMD-16496"/>
<dbReference type="EMDB" id="EMD-16497"/>
<dbReference type="EMDB" id="EMD-16498"/>
<dbReference type="EMDB" id="EMD-16499"/>
<dbReference type="EMDB" id="EMD-16500"/>
<dbReference type="EMDB" id="EMD-16501"/>
<dbReference type="EMDB" id="EMD-16503"/>
<dbReference type="EMDB" id="EMD-16504"/>
<dbReference type="EMDB" id="EMD-16530"/>
<dbReference type="EMDB" id="EMD-16613"/>
<dbReference type="EMDB" id="EMD-16641"/>
<dbReference type="EMDB" id="EMD-16646"/>
<dbReference type="EMDB" id="EMD-16652"/>
<dbReference type="EMDB" id="EMD-17346"/>
<dbReference type="EMDB" id="EMD-17347"/>
<dbReference type="EMDB" id="EMD-17348"/>
<dbReference type="EMDB" id="EMD-17631"/>
<dbReference type="EMDB" id="EMD-17667"/>
<dbReference type="EMDB" id="EMD-17743"/>
<dbReference type="EMDB" id="EMD-17959"/>
<dbReference type="EMDB" id="EMD-18145"/>
<dbReference type="EMDB" id="EMD-18320"/>
<dbReference type="EMDB" id="EMD-18458"/>
<dbReference type="EMDB" id="EMD-18534"/>
<dbReference type="EMDB" id="EMD-18950"/>
<dbReference type="EMDB" id="EMD-19004"/>
<dbReference type="EMDB" id="EMD-19426"/>
<dbReference type="EMDB" id="EMD-19427"/>
<dbReference type="EMDB" id="EMD-19428"/>
<dbReference type="EMDB" id="EMD-19429"/>
<dbReference type="EMDB" id="EMD-20048"/>
<dbReference type="EMDB" id="EMD-20052"/>
<dbReference type="EMDB" id="EMD-21620"/>
<dbReference type="EMDB" id="EMD-21625"/>
<dbReference type="EMDB" id="EMD-21630"/>
<dbReference type="EMDB" id="EMD-21631"/>
<dbReference type="EMDB" id="EMD-21632"/>
<dbReference type="EMDB" id="EMD-21633"/>
<dbReference type="EMDB" id="EMD-21634"/>
<dbReference type="EMDB" id="EMD-21635"/>
<dbReference type="EMDB" id="EMD-21636"/>
<dbReference type="EMDB" id="EMD-21637"/>
<dbReference type="EMDB" id="EMD-21638"/>
<dbReference type="EMDB" id="EMD-21639"/>
<dbReference type="EMDB" id="EMD-21640"/>
<dbReference type="EMDB" id="EMD-21641"/>
<dbReference type="EMDB" id="EMD-21856"/>
<dbReference type="EMDB" id="EMD-21857"/>
<dbReference type="EMDB" id="EMD-21858"/>
<dbReference type="EMDB" id="EMD-22459"/>
<dbReference type="EMDB" id="EMD-22461"/>
<dbReference type="EMDB" id="EMD-22464"/>
<dbReference type="EMDB" id="EMD-22466"/>
<dbReference type="EMDB" id="EMD-22469"/>
<dbReference type="EMDB" id="EMD-22472"/>
<dbReference type="EMDB" id="EMD-22669"/>
<dbReference type="EMDB" id="EMD-22670"/>
<dbReference type="EMDB" id="EMD-22671"/>
<dbReference type="EMDB" id="EMD-22672"/>
<dbReference type="EMDB" id="EMD-22673"/>
<dbReference type="EMDB" id="EMD-22674"/>
<dbReference type="EMDB" id="EMD-23528"/>
<dbReference type="EMDB" id="EMD-24120"/>
<dbReference type="EMDB" id="EMD-24132"/>
<dbReference type="EMDB" id="EMD-24133"/>
<dbReference type="EMDB" id="EMD-24134"/>
<dbReference type="EMDB" id="EMD-24135"/>
<dbReference type="EMDB" id="EMD-24136"/>
<dbReference type="EMDB" id="EMD-24803"/>
<dbReference type="EMDB" id="EMD-25405"/>
<dbReference type="EMDB" id="EMD-25407"/>
<dbReference type="EMDB" id="EMD-25409"/>
<dbReference type="EMDB" id="EMD-25410"/>
<dbReference type="EMDB" id="EMD-25411"/>
<dbReference type="EMDB" id="EMD-25415"/>
<dbReference type="EMDB" id="EMD-25418"/>
<dbReference type="EMDB" id="EMD-25420"/>
<dbReference type="EMDB" id="EMD-25421"/>
<dbReference type="EMDB" id="EMD-30215"/>
<dbReference type="EMDB" id="EMD-30598"/>
<dbReference type="EMDB" id="EMD-30611"/>
<dbReference type="EMDB" id="EMD-33660"/>
<dbReference type="EMDB" id="EMD-33661"/>
<dbReference type="EMDB" id="EMD-33662"/>
<dbReference type="EMDB" id="EMD-33663"/>
<dbReference type="EMDB" id="EMD-33664"/>
<dbReference type="EMDB" id="EMD-33665"/>
<dbReference type="EMDB" id="EMD-3489"/>
<dbReference type="EMDB" id="EMD-3490"/>
<dbReference type="EMDB" id="EMD-3492"/>
<dbReference type="EMDB" id="EMD-3493"/>
<dbReference type="EMDB" id="EMD-35001"/>
<dbReference type="EMDB" id="EMD-35020"/>
<dbReference type="EMDB" id="EMD-35022"/>
<dbReference type="EMDB" id="EMD-3508"/>
<dbReference type="EMDB" id="EMD-35411"/>
<dbReference type="EMDB" id="EMD-35412"/>
<dbReference type="EMDB" id="EMD-35939"/>
<dbReference type="EMDB" id="EMD-3617"/>
<dbReference type="EMDB" id="EMD-3713"/>
<dbReference type="EMDB" id="EMD-37271"/>
<dbReference type="EMDB" id="EMD-3730"/>
<dbReference type="EMDB" id="EMD-3898"/>
<dbReference type="EMDB" id="EMD-3899"/>
<dbReference type="EMDB" id="EMD-3903"/>
<dbReference type="EMDB" id="EMD-39577"/>
<dbReference type="EMDB" id="EMD-39578"/>
<dbReference type="EMDB" id="EMD-39579"/>
<dbReference type="EMDB" id="EMD-39580"/>
<dbReference type="EMDB" id="EMD-39581"/>
<dbReference type="EMDB" id="EMD-4001"/>
<dbReference type="EMDB" id="EMD-4121"/>
<dbReference type="EMDB" id="EMD-4122"/>
<dbReference type="EMDB" id="EMD-4123"/>
<dbReference type="EMDB" id="EMD-4124"/>
<dbReference type="EMDB" id="EMD-4125"/>
<dbReference type="EMDB" id="EMD-4126"/>
<dbReference type="EMDB" id="EMD-4378"/>
<dbReference type="EMDB" id="EMD-4379"/>
<dbReference type="EMDB" id="EMD-4380"/>
<dbReference type="EMDB" id="EMD-4381"/>
<dbReference type="EMDB" id="EMD-4382"/>
<dbReference type="EMDB" id="EMD-4383"/>
<dbReference type="EMDB" id="EMD-4477"/>
<dbReference type="EMDB" id="EMD-4478"/>
<dbReference type="EMDB" id="EMD-4638"/>
<dbReference type="EMDB" id="EMD-50296"/>
<dbReference type="EMDB" id="EMD-51318"/>
<dbReference type="EMDB" id="EMD-51340"/>
<dbReference type="EMDB" id="EMD-51836"/>
<dbReference type="EMDB" id="EMD-51837"/>
<dbReference type="EMDB" id="EMD-51838"/>
<dbReference type="EMDB" id="EMD-51839"/>
<dbReference type="EMDB" id="EMD-51840"/>
<dbReference type="EMDB" id="EMD-51841"/>
<dbReference type="EMDB" id="EMD-51842"/>
<dbReference type="EMDB" id="EMD-51843"/>
<dbReference type="EMDB" id="EMD-51977"/>
<dbReference type="EMDB" id="EMD-51978"/>
<dbReference type="EMDB" id="EMD-51981"/>
<dbReference type="EMDB" id="EMD-6667"/>
<dbReference type="EMDB" id="EMD-7289"/>
<dbReference type="EMDB" id="EMD-7341"/>
<dbReference type="EMDB" id="EMD-8000"/>
<dbReference type="EMDB" id="EMD-8001"/>
<dbReference type="EMDB" id="EMD-8002"/>
<dbReference type="EMDB" id="EMD-8003"/>
<dbReference type="EMDB" id="EMD-8004"/>
<dbReference type="EMDB" id="EMD-8107"/>
<dbReference type="EMDB" id="EMD-8175"/>
<dbReference type="EMDB" id="EMD-8176"/>
<dbReference type="EMDB" id="EMD-8237"/>
<dbReference type="EMDB" id="EMD-8238"/>
<dbReference type="EMDB" id="EMD-8279"/>
<dbReference type="EMDB" id="EMD-8280"/>
<dbReference type="EMDB" id="EMD-8281"/>
<dbReference type="EMDB" id="EMD-8282"/>
<dbReference type="EMDB" id="EMD-8505"/>
<dbReference type="EMDB" id="EMD-8615"/>
<dbReference type="EMDB" id="EMD-8616"/>
<dbReference type="EMDB" id="EMD-8617"/>
<dbReference type="EMDB" id="EMD-8618"/>
<dbReference type="EMDB" id="EMD-8619"/>
<dbReference type="EMDB" id="EMD-8620"/>
<dbReference type="EMDB" id="EMD-8813"/>
<dbReference type="EMDB" id="EMD-8814"/>
<dbReference type="EMDB" id="EMD-8815"/>
<dbReference type="EMDB" id="EMD-8828"/>
<dbReference type="SMR" id="P0A7N4"/>
<dbReference type="BioGRID" id="4261029">
    <property type="interactions" value="69"/>
</dbReference>
<dbReference type="BioGRID" id="850029">
    <property type="interactions" value="3"/>
</dbReference>
<dbReference type="ComplexPortal" id="CPX-3807">
    <property type="entry name" value="50S large ribosomal subunit"/>
</dbReference>
<dbReference type="DIP" id="DIP-35782N"/>
<dbReference type="FunCoup" id="P0A7N4">
    <property type="interactions" value="276"/>
</dbReference>
<dbReference type="IntAct" id="P0A7N4">
    <property type="interactions" value="22"/>
</dbReference>
<dbReference type="STRING" id="511145.b1089"/>
<dbReference type="jPOST" id="P0A7N4"/>
<dbReference type="PaxDb" id="511145-b1089"/>
<dbReference type="EnsemblBacteria" id="AAC74173">
    <property type="protein sequence ID" value="AAC74173"/>
    <property type="gene ID" value="b1089"/>
</dbReference>
<dbReference type="GeneID" id="93776319"/>
<dbReference type="GeneID" id="945657"/>
<dbReference type="KEGG" id="ecj:JW1075"/>
<dbReference type="KEGG" id="eco:b1089"/>
<dbReference type="KEGG" id="ecoc:C3026_06590"/>
<dbReference type="PATRIC" id="fig|1411691.4.peg.1179"/>
<dbReference type="EchoBASE" id="EB0883"/>
<dbReference type="eggNOG" id="COG0333">
    <property type="taxonomic scope" value="Bacteria"/>
</dbReference>
<dbReference type="HOGENOM" id="CLU_129084_2_1_6"/>
<dbReference type="InParanoid" id="P0A7N4"/>
<dbReference type="OMA" id="GMHRAHD"/>
<dbReference type="OrthoDB" id="9801927at2"/>
<dbReference type="PhylomeDB" id="P0A7N4"/>
<dbReference type="BioCyc" id="EcoCyc:EG10890-MONOMER"/>
<dbReference type="BioCyc" id="MetaCyc:EG10890-MONOMER"/>
<dbReference type="EvolutionaryTrace" id="P0A7N4"/>
<dbReference type="PRO" id="PR:P0A7N4"/>
<dbReference type="Proteomes" id="UP000000625">
    <property type="component" value="Chromosome"/>
</dbReference>
<dbReference type="GO" id="GO:0005737">
    <property type="term" value="C:cytoplasm"/>
    <property type="evidence" value="ECO:0000314"/>
    <property type="project" value="ComplexPortal"/>
</dbReference>
<dbReference type="GO" id="GO:0005829">
    <property type="term" value="C:cytosol"/>
    <property type="evidence" value="ECO:0000314"/>
    <property type="project" value="EcoCyc"/>
</dbReference>
<dbReference type="GO" id="GO:0022625">
    <property type="term" value="C:cytosolic large ribosomal subunit"/>
    <property type="evidence" value="ECO:0000314"/>
    <property type="project" value="CAFA"/>
</dbReference>
<dbReference type="GO" id="GO:0003735">
    <property type="term" value="F:structural constituent of ribosome"/>
    <property type="evidence" value="ECO:0000314"/>
    <property type="project" value="CAFA"/>
</dbReference>
<dbReference type="GO" id="GO:0002181">
    <property type="term" value="P:cytoplasmic translation"/>
    <property type="evidence" value="ECO:0000303"/>
    <property type="project" value="ComplexPortal"/>
</dbReference>
<dbReference type="GO" id="GO:0009314">
    <property type="term" value="P:response to radiation"/>
    <property type="evidence" value="ECO:0000315"/>
    <property type="project" value="EcoCyc"/>
</dbReference>
<dbReference type="GO" id="GO:0000302">
    <property type="term" value="P:response to reactive oxygen species"/>
    <property type="evidence" value="ECO:0000315"/>
    <property type="project" value="EcoCyc"/>
</dbReference>
<dbReference type="GO" id="GO:0000027">
    <property type="term" value="P:ribosomal large subunit assembly"/>
    <property type="evidence" value="ECO:0000314"/>
    <property type="project" value="CAFA"/>
</dbReference>
<dbReference type="HAMAP" id="MF_00340">
    <property type="entry name" value="Ribosomal_bL32"/>
    <property type="match status" value="1"/>
</dbReference>
<dbReference type="InterPro" id="IPR002677">
    <property type="entry name" value="Ribosomal_bL32"/>
</dbReference>
<dbReference type="InterPro" id="IPR044957">
    <property type="entry name" value="Ribosomal_bL32_bact"/>
</dbReference>
<dbReference type="InterPro" id="IPR011332">
    <property type="entry name" value="Ribosomal_zn-bd"/>
</dbReference>
<dbReference type="NCBIfam" id="TIGR01031">
    <property type="entry name" value="rpmF_bact"/>
    <property type="match status" value="1"/>
</dbReference>
<dbReference type="PANTHER" id="PTHR35534">
    <property type="entry name" value="50S RIBOSOMAL PROTEIN L32"/>
    <property type="match status" value="1"/>
</dbReference>
<dbReference type="PANTHER" id="PTHR35534:SF1">
    <property type="entry name" value="LARGE RIBOSOMAL SUBUNIT PROTEIN BL32"/>
    <property type="match status" value="1"/>
</dbReference>
<dbReference type="Pfam" id="PF01783">
    <property type="entry name" value="Ribosomal_L32p"/>
    <property type="match status" value="1"/>
</dbReference>
<dbReference type="SUPFAM" id="SSF57829">
    <property type="entry name" value="Zn-binding ribosomal proteins"/>
    <property type="match status" value="1"/>
</dbReference>
<evidence type="ECO:0000256" key="1">
    <source>
        <dbReference type="SAM" id="MobiDB-lite"/>
    </source>
</evidence>
<evidence type="ECO:0000269" key="2">
    <source>
    </source>
</evidence>
<evidence type="ECO:0000269" key="3">
    <source>
    </source>
</evidence>
<evidence type="ECO:0000269" key="4">
    <source>
    </source>
</evidence>
<evidence type="ECO:0000269" key="5">
    <source>
    </source>
</evidence>
<evidence type="ECO:0000269" key="6">
    <source>
    </source>
</evidence>
<evidence type="ECO:0000269" key="7">
    <source>
    </source>
</evidence>
<evidence type="ECO:0000269" key="8">
    <source>
    </source>
</evidence>
<evidence type="ECO:0000269" key="9">
    <source>
    </source>
</evidence>
<evidence type="ECO:0000269" key="10">
    <source>
    </source>
</evidence>
<evidence type="ECO:0000269" key="11">
    <source>
    </source>
</evidence>
<evidence type="ECO:0000269" key="12">
    <source ref="6"/>
</evidence>
<evidence type="ECO:0000303" key="13">
    <source>
    </source>
</evidence>
<evidence type="ECO:0000305" key="14"/>
<evidence type="ECO:0007829" key="15">
    <source>
        <dbReference type="PDB" id="7BL4"/>
    </source>
</evidence>
<evidence type="ECO:0007829" key="16">
    <source>
        <dbReference type="PDB" id="8CGK"/>
    </source>
</evidence>
<evidence type="ECO:0007829" key="17">
    <source>
        <dbReference type="PDB" id="8RPZ"/>
    </source>
</evidence>
<accession>P0A7N4</accession>
<accession>P02435</accession>
<keyword id="KW-0002">3D-structure</keyword>
<keyword id="KW-0903">Direct protein sequencing</keyword>
<keyword id="KW-1185">Reference proteome</keyword>
<keyword id="KW-0687">Ribonucleoprotein</keyword>
<keyword id="KW-0689">Ribosomal protein</keyword>
<name>RL32_ECOLI</name>
<sequence>MAVQQNKPTRSKRGMRRSHDALTAVTSLSVDKTSGEKHLRHHITADGYYRGRKVIAK</sequence>
<comment type="subunit">
    <text evidence="2 3 4 5 6 7 8 9 10 11">Part of the 50S ribosomal subunit (PubMed:10094780, PubMed:12809609, PubMed:16272117, PubMed:24844575, PubMed:25310980, PubMed:27906160, PubMed:27906161, PubMed:27934701, PubMed:765258). Contacts L17 (PubMed:2665813).</text>
</comment>
<comment type="interaction">
    <interactant intactId="EBI-1112732">
        <id>P0A7N4</id>
    </interactant>
    <interactant intactId="EBI-543024">
        <id>P0A7M2</id>
        <label>rpmB</label>
    </interactant>
    <organismsDiffer>false</organismsDiffer>
    <experiments>2</experiments>
</comment>
<comment type="mass spectrometry"/>
<comment type="similarity">
    <text evidence="14">Belongs to the bacterial ribosomal protein bL32 family.</text>
</comment>